<gene>
    <name evidence="29" type="primary">PSMB5</name>
    <name type="synonym">LMPX</name>
    <name type="synonym">MB1</name>
    <name type="synonym">X</name>
</gene>
<name>PSB5_HUMAN</name>
<protein>
    <recommendedName>
        <fullName evidence="28">Proteasome subunit beta type-5</fullName>
        <ecNumber evidence="15">3.4.25.1</ecNumber>
    </recommendedName>
    <alternativeName>
        <fullName>Macropain epsilon chain</fullName>
    </alternativeName>
    <alternativeName>
        <fullName>Multicatalytic endopeptidase complex epsilon chain</fullName>
    </alternativeName>
    <alternativeName>
        <fullName>Proteasome chain 6</fullName>
    </alternativeName>
    <alternativeName>
        <fullName>Proteasome epsilon chain</fullName>
    </alternativeName>
    <alternativeName>
        <fullName>Proteasome subunit MB1</fullName>
    </alternativeName>
    <alternativeName>
        <fullName>Proteasome subunit X</fullName>
    </alternativeName>
    <alternativeName>
        <fullName evidence="26">Proteasome subunit beta-5</fullName>
        <shortName evidence="26">beta-5</shortName>
    </alternativeName>
</protein>
<sequence>MALASVLERPLPVNQRGFFGLGGRADLLDLGPGSLSDGLSLAAPGWGVPEEPGIEMLHGTTTLAFKFRHGVIVAADSRATAGAYIASQTVKKVIEINPYLLGTMAGGAADCSFWERLLARQCRIYELRNKERISVAAASKLLANMVYQYKGMGLSMGTMICGWDKRGPGLYYVDSEGNRISGATFSVGSGSVYAYGVMDRGYSYDLEVEQAYDLARRAIYQATYRDAYSGGAVNLYHVREDGWIRVSSDNVADLHEKYSGSTP</sequence>
<feature type="propeptide" id="PRO_0000026589" description="Removed in mature form" evidence="12">
    <location>
        <begin position="1"/>
        <end position="59"/>
    </location>
</feature>
<feature type="chain" id="PRO_0000026590" description="Proteasome subunit beta type-5">
    <location>
        <begin position="60"/>
        <end position="263"/>
    </location>
</feature>
<feature type="active site" description="Nucleophile" evidence="13 18">
    <location>
        <position position="60"/>
    </location>
</feature>
<feature type="binding site" evidence="8 9 11">
    <location>
        <position position="108"/>
    </location>
    <ligand>
        <name>bortezomib</name>
        <dbReference type="ChEBI" id="CHEBI:52717"/>
    </ligand>
</feature>
<feature type="splice variant" id="VSP_045686" description="In isoform 3." evidence="25">
    <location>
        <begin position="1"/>
        <end position="103"/>
    </location>
</feature>
<feature type="splice variant" id="VSP_041263" description="In isoform 2." evidence="24 27">
    <original>GLYYVDSEGNRISGATFSVGSGSVYAYGVMDRGYSYDLEVEQAYDLARRAIYQATYRDAYSGGAVNLYHVREDGWIRVSSDNVADLHEKYSGSTP</original>
    <variation>VSEVLCLKPKSFGMYLFCGCAERIGNMARPLLRGQ</variation>
    <location>
        <begin position="169"/>
        <end position="263"/>
    </location>
</feature>
<feature type="sequence variant" id="VAR_051549" description="In dbSNP:rs11543947.">
    <original>R</original>
    <variation>C</variation>
    <location>
        <position position="24"/>
    </location>
</feature>
<feature type="mutagenesis site" description="Displays resistance to the bortezomib, a proteasome inhibitor of the chymotrypsin-like activity. Displays high resistance to the bortezomib, a proteasome inhibitor of the chymotrypsin-like activity; when associated with V-109." evidence="8 9 11">
    <original>A</original>
    <variation>T</variation>
    <location>
        <position position="108"/>
    </location>
</feature>
<feature type="mutagenesis site" description="Displays high resistance to the bortezomib, a proteasome inhibitor of the chymotrypsin-like activity." evidence="8 9 11">
    <original>A</original>
    <variation>V</variation>
    <location>
        <position position="108"/>
    </location>
</feature>
<feature type="mutagenesis site" description="Displays high resistance to the bortezomib, a proteasome inhibitor of the chymotrypsin-like activity; when associated with T-108." evidence="11">
    <original>A</original>
    <variation>V</variation>
    <location>
        <position position="109"/>
    </location>
</feature>
<feature type="sequence conflict" description="In Ref. 8; BAA06097." evidence="28" ref="8">
    <original>LASV</original>
    <variation>IRGR</variation>
    <location>
        <begin position="3"/>
        <end position="6"/>
    </location>
</feature>
<feature type="sequence conflict" description="In Ref. 6; BC004146." evidence="28" ref="6">
    <original>LAS</original>
    <variation>HEG</variation>
    <location>
        <begin position="3"/>
        <end position="5"/>
    </location>
</feature>
<feature type="sequence conflict" description="In Ref. 11; AA sequence." evidence="28" ref="11">
    <original>I</original>
    <variation>F</variation>
    <location>
        <position position="85"/>
    </location>
</feature>
<feature type="sequence conflict" description="In Ref. 9; AAB33092." evidence="28" ref="9">
    <original>A</original>
    <variation>G</variation>
    <location>
        <position position="109"/>
    </location>
</feature>
<feature type="sequence conflict" description="In Ref. 9; AAB33092." evidence="28" ref="9">
    <original>T</original>
    <variation>S</variation>
    <location>
        <position position="158"/>
    </location>
</feature>
<feature type="helix" evidence="33">
    <location>
        <begin position="2"/>
        <end position="6"/>
    </location>
</feature>
<feature type="strand" evidence="33">
    <location>
        <begin position="7"/>
        <end position="9"/>
    </location>
</feature>
<feature type="turn" evidence="33">
    <location>
        <begin position="12"/>
        <end position="14"/>
    </location>
</feature>
<feature type="strand" evidence="33">
    <location>
        <begin position="15"/>
        <end position="19"/>
    </location>
</feature>
<feature type="turn" evidence="33">
    <location>
        <begin position="24"/>
        <end position="28"/>
    </location>
</feature>
<feature type="strand" evidence="30">
    <location>
        <begin position="62"/>
        <end position="67"/>
    </location>
</feature>
<feature type="strand" evidence="30">
    <location>
        <begin position="70"/>
        <end position="75"/>
    </location>
</feature>
<feature type="strand" evidence="30">
    <location>
        <begin position="79"/>
        <end position="81"/>
    </location>
</feature>
<feature type="strand" evidence="30">
    <location>
        <begin position="84"/>
        <end position="88"/>
    </location>
</feature>
<feature type="strand" evidence="30">
    <location>
        <begin position="93"/>
        <end position="97"/>
    </location>
</feature>
<feature type="strand" evidence="30">
    <location>
        <begin position="100"/>
        <end position="103"/>
    </location>
</feature>
<feature type="strand" evidence="32">
    <location>
        <begin position="105"/>
        <end position="107"/>
    </location>
</feature>
<feature type="helix" evidence="30">
    <location>
        <begin position="108"/>
        <end position="129"/>
    </location>
</feature>
<feature type="helix" evidence="30">
    <location>
        <begin position="135"/>
        <end position="147"/>
    </location>
</feature>
<feature type="turn" evidence="30">
    <location>
        <begin position="148"/>
        <end position="151"/>
    </location>
</feature>
<feature type="strand" evidence="30">
    <location>
        <begin position="156"/>
        <end position="164"/>
    </location>
</feature>
<feature type="strand" evidence="30">
    <location>
        <begin position="167"/>
        <end position="174"/>
    </location>
</feature>
<feature type="strand" evidence="30">
    <location>
        <begin position="179"/>
        <end position="181"/>
    </location>
</feature>
<feature type="strand" evidence="30">
    <location>
        <begin position="183"/>
        <end position="188"/>
    </location>
</feature>
<feature type="helix" evidence="30">
    <location>
        <begin position="191"/>
        <end position="201"/>
    </location>
</feature>
<feature type="helix" evidence="30">
    <location>
        <begin position="208"/>
        <end position="225"/>
    </location>
</feature>
<feature type="strand" evidence="31">
    <location>
        <begin position="226"/>
        <end position="228"/>
    </location>
</feature>
<feature type="strand" evidence="30">
    <location>
        <begin position="231"/>
        <end position="239"/>
    </location>
</feature>
<feature type="strand" evidence="30">
    <location>
        <begin position="242"/>
        <end position="250"/>
    </location>
</feature>
<feature type="helix" evidence="30">
    <location>
        <begin position="251"/>
        <end position="258"/>
    </location>
</feature>
<evidence type="ECO:0000255" key="1">
    <source>
        <dbReference type="PROSITE-ProRule" id="PRU00809"/>
    </source>
</evidence>
<evidence type="ECO:0000269" key="2">
    <source>
    </source>
</evidence>
<evidence type="ECO:0000269" key="3">
    <source>
    </source>
</evidence>
<evidence type="ECO:0000269" key="4">
    <source>
    </source>
</evidence>
<evidence type="ECO:0000269" key="5">
    <source>
    </source>
</evidence>
<evidence type="ECO:0000269" key="6">
    <source>
    </source>
</evidence>
<evidence type="ECO:0000269" key="7">
    <source>
    </source>
</evidence>
<evidence type="ECO:0000269" key="8">
    <source>
    </source>
</evidence>
<evidence type="ECO:0000269" key="9">
    <source>
    </source>
</evidence>
<evidence type="ECO:0000269" key="10">
    <source>
    </source>
</evidence>
<evidence type="ECO:0000269" key="11">
    <source>
    </source>
</evidence>
<evidence type="ECO:0000269" key="12">
    <source>
    </source>
</evidence>
<evidence type="ECO:0000269" key="13">
    <source>
    </source>
</evidence>
<evidence type="ECO:0000269" key="14">
    <source>
    </source>
</evidence>
<evidence type="ECO:0000269" key="15">
    <source>
    </source>
</evidence>
<evidence type="ECO:0000269" key="16">
    <source>
    </source>
</evidence>
<evidence type="ECO:0000269" key="17">
    <source>
    </source>
</evidence>
<evidence type="ECO:0000269" key="18">
    <source>
    </source>
</evidence>
<evidence type="ECO:0000269" key="19">
    <source>
    </source>
</evidence>
<evidence type="ECO:0000269" key="20">
    <source>
    </source>
</evidence>
<evidence type="ECO:0000269" key="21">
    <source>
    </source>
</evidence>
<evidence type="ECO:0000269" key="22">
    <source>
    </source>
</evidence>
<evidence type="ECO:0000269" key="23">
    <source>
    </source>
</evidence>
<evidence type="ECO:0000303" key="24">
    <source>
    </source>
</evidence>
<evidence type="ECO:0000303" key="25">
    <source>
    </source>
</evidence>
<evidence type="ECO:0000303" key="26">
    <source>
    </source>
</evidence>
<evidence type="ECO:0000303" key="27">
    <source ref="7"/>
</evidence>
<evidence type="ECO:0000305" key="28"/>
<evidence type="ECO:0000312" key="29">
    <source>
        <dbReference type="HGNC" id="HGNC:9542"/>
    </source>
</evidence>
<evidence type="ECO:0007829" key="30">
    <source>
        <dbReference type="PDB" id="5LE5"/>
    </source>
</evidence>
<evidence type="ECO:0007829" key="31">
    <source>
        <dbReference type="PDB" id="6KWY"/>
    </source>
</evidence>
<evidence type="ECO:0007829" key="32">
    <source>
        <dbReference type="PDB" id="7NHT"/>
    </source>
</evidence>
<evidence type="ECO:0007829" key="33">
    <source>
        <dbReference type="PDB" id="8QYN"/>
    </source>
</evidence>
<reference key="1">
    <citation type="journal article" date="1996" name="Immunogenetics">
        <title>Divergent intron arrangement in the MB1/LMP7 proteasome gene pair.</title>
        <authorList>
            <person name="Abdulla S."/>
            <person name="Beck S."/>
            <person name="Belich M."/>
            <person name="Jackson A."/>
            <person name="Nakamura T."/>
            <person name="Trowsdale J."/>
        </authorList>
    </citation>
    <scope>NUCLEOTIDE SEQUENCE [GENOMIC DNA]</scope>
</reference>
<reference key="2">
    <citation type="journal article" date="2004" name="Nat. Genet.">
        <title>Complete sequencing and characterization of 21,243 full-length human cDNAs.</title>
        <authorList>
            <person name="Ota T."/>
            <person name="Suzuki Y."/>
            <person name="Nishikawa T."/>
            <person name="Otsuki T."/>
            <person name="Sugiyama T."/>
            <person name="Irie R."/>
            <person name="Wakamatsu A."/>
            <person name="Hayashi K."/>
            <person name="Sato H."/>
            <person name="Nagai K."/>
            <person name="Kimura K."/>
            <person name="Makita H."/>
            <person name="Sekine M."/>
            <person name="Obayashi M."/>
            <person name="Nishi T."/>
            <person name="Shibahara T."/>
            <person name="Tanaka T."/>
            <person name="Ishii S."/>
            <person name="Yamamoto J."/>
            <person name="Saito K."/>
            <person name="Kawai Y."/>
            <person name="Isono Y."/>
            <person name="Nakamura Y."/>
            <person name="Nagahari K."/>
            <person name="Murakami K."/>
            <person name="Yasuda T."/>
            <person name="Iwayanagi T."/>
            <person name="Wagatsuma M."/>
            <person name="Shiratori A."/>
            <person name="Sudo H."/>
            <person name="Hosoiri T."/>
            <person name="Kaku Y."/>
            <person name="Kodaira H."/>
            <person name="Kondo H."/>
            <person name="Sugawara M."/>
            <person name="Takahashi M."/>
            <person name="Kanda K."/>
            <person name="Yokoi T."/>
            <person name="Furuya T."/>
            <person name="Kikkawa E."/>
            <person name="Omura Y."/>
            <person name="Abe K."/>
            <person name="Kamihara K."/>
            <person name="Katsuta N."/>
            <person name="Sato K."/>
            <person name="Tanikawa M."/>
            <person name="Yamazaki M."/>
            <person name="Ninomiya K."/>
            <person name="Ishibashi T."/>
            <person name="Yamashita H."/>
            <person name="Murakawa K."/>
            <person name="Fujimori K."/>
            <person name="Tanai H."/>
            <person name="Kimata M."/>
            <person name="Watanabe M."/>
            <person name="Hiraoka S."/>
            <person name="Chiba Y."/>
            <person name="Ishida S."/>
            <person name="Ono Y."/>
            <person name="Takiguchi S."/>
            <person name="Watanabe S."/>
            <person name="Yosida M."/>
            <person name="Hotuta T."/>
            <person name="Kusano J."/>
            <person name="Kanehori K."/>
            <person name="Takahashi-Fujii A."/>
            <person name="Hara H."/>
            <person name="Tanase T.-O."/>
            <person name="Nomura Y."/>
            <person name="Togiya S."/>
            <person name="Komai F."/>
            <person name="Hara R."/>
            <person name="Takeuchi K."/>
            <person name="Arita M."/>
            <person name="Imose N."/>
            <person name="Musashino K."/>
            <person name="Yuuki H."/>
            <person name="Oshima A."/>
            <person name="Sasaki N."/>
            <person name="Aotsuka S."/>
            <person name="Yoshikawa Y."/>
            <person name="Matsunawa H."/>
            <person name="Ichihara T."/>
            <person name="Shiohata N."/>
            <person name="Sano S."/>
            <person name="Moriya S."/>
            <person name="Momiyama H."/>
            <person name="Satoh N."/>
            <person name="Takami S."/>
            <person name="Terashima Y."/>
            <person name="Suzuki O."/>
            <person name="Nakagawa S."/>
            <person name="Senoh A."/>
            <person name="Mizoguchi H."/>
            <person name="Goto Y."/>
            <person name="Shimizu F."/>
            <person name="Wakebe H."/>
            <person name="Hishigaki H."/>
            <person name="Watanabe T."/>
            <person name="Sugiyama A."/>
            <person name="Takemoto M."/>
            <person name="Kawakami B."/>
            <person name="Yamazaki M."/>
            <person name="Watanabe K."/>
            <person name="Kumagai A."/>
            <person name="Itakura S."/>
            <person name="Fukuzumi Y."/>
            <person name="Fujimori Y."/>
            <person name="Komiyama M."/>
            <person name="Tashiro H."/>
            <person name="Tanigami A."/>
            <person name="Fujiwara T."/>
            <person name="Ono T."/>
            <person name="Yamada K."/>
            <person name="Fujii Y."/>
            <person name="Ozaki K."/>
            <person name="Hirao M."/>
            <person name="Ohmori Y."/>
            <person name="Kawabata A."/>
            <person name="Hikiji T."/>
            <person name="Kobatake N."/>
            <person name="Inagaki H."/>
            <person name="Ikema Y."/>
            <person name="Okamoto S."/>
            <person name="Okitani R."/>
            <person name="Kawakami T."/>
            <person name="Noguchi S."/>
            <person name="Itoh T."/>
            <person name="Shigeta K."/>
            <person name="Senba T."/>
            <person name="Matsumura K."/>
            <person name="Nakajima Y."/>
            <person name="Mizuno T."/>
            <person name="Morinaga M."/>
            <person name="Sasaki M."/>
            <person name="Togashi T."/>
            <person name="Oyama M."/>
            <person name="Hata H."/>
            <person name="Watanabe M."/>
            <person name="Komatsu T."/>
            <person name="Mizushima-Sugano J."/>
            <person name="Satoh T."/>
            <person name="Shirai Y."/>
            <person name="Takahashi Y."/>
            <person name="Nakagawa K."/>
            <person name="Okumura K."/>
            <person name="Nagase T."/>
            <person name="Nomura N."/>
            <person name="Kikuchi H."/>
            <person name="Masuho Y."/>
            <person name="Yamashita R."/>
            <person name="Nakai K."/>
            <person name="Yada T."/>
            <person name="Nakamura Y."/>
            <person name="Ohara O."/>
            <person name="Isogai T."/>
            <person name="Sugano S."/>
        </authorList>
    </citation>
    <scope>NUCLEOTIDE SEQUENCE [LARGE SCALE MRNA] (ISOFORMS 1 AND 2)</scope>
    <source>
        <tissue>Skeletal muscle</tissue>
    </source>
</reference>
<reference key="3">
    <citation type="journal article" date="2007" name="BMC Genomics">
        <title>The full-ORF clone resource of the German cDNA consortium.</title>
        <authorList>
            <person name="Bechtel S."/>
            <person name="Rosenfelder H."/>
            <person name="Duda A."/>
            <person name="Schmidt C.P."/>
            <person name="Ernst U."/>
            <person name="Wellenreuther R."/>
            <person name="Mehrle A."/>
            <person name="Schuster C."/>
            <person name="Bahr A."/>
            <person name="Bloecker H."/>
            <person name="Heubner D."/>
            <person name="Hoerlein A."/>
            <person name="Michel G."/>
            <person name="Wedler H."/>
            <person name="Koehrer K."/>
            <person name="Ottenwaelder B."/>
            <person name="Poustka A."/>
            <person name="Wiemann S."/>
            <person name="Schupp I."/>
        </authorList>
    </citation>
    <scope>NUCLEOTIDE SEQUENCE [LARGE SCALE MRNA] (ISOFORM 1)</scope>
    <source>
        <tissue>Endometrial adenocarcinoma</tissue>
    </source>
</reference>
<reference key="4">
    <citation type="journal article" date="2003" name="Nature">
        <title>The DNA sequence and analysis of human chromosome 14.</title>
        <authorList>
            <person name="Heilig R."/>
            <person name="Eckenberg R."/>
            <person name="Petit J.-L."/>
            <person name="Fonknechten N."/>
            <person name="Da Silva C."/>
            <person name="Cattolico L."/>
            <person name="Levy M."/>
            <person name="Barbe V."/>
            <person name="De Berardinis V."/>
            <person name="Ureta-Vidal A."/>
            <person name="Pelletier E."/>
            <person name="Vico V."/>
            <person name="Anthouard V."/>
            <person name="Rowen L."/>
            <person name="Madan A."/>
            <person name="Qin S."/>
            <person name="Sun H."/>
            <person name="Du H."/>
            <person name="Pepin K."/>
            <person name="Artiguenave F."/>
            <person name="Robert C."/>
            <person name="Cruaud C."/>
            <person name="Bruels T."/>
            <person name="Jaillon O."/>
            <person name="Friedlander L."/>
            <person name="Samson G."/>
            <person name="Brottier P."/>
            <person name="Cure S."/>
            <person name="Segurens B."/>
            <person name="Aniere F."/>
            <person name="Samain S."/>
            <person name="Crespeau H."/>
            <person name="Abbasi N."/>
            <person name="Aiach N."/>
            <person name="Boscus D."/>
            <person name="Dickhoff R."/>
            <person name="Dors M."/>
            <person name="Dubois I."/>
            <person name="Friedman C."/>
            <person name="Gouyvenoux M."/>
            <person name="James R."/>
            <person name="Madan A."/>
            <person name="Mairey-Estrada B."/>
            <person name="Mangenot S."/>
            <person name="Martins N."/>
            <person name="Menard M."/>
            <person name="Oztas S."/>
            <person name="Ratcliffe A."/>
            <person name="Shaffer T."/>
            <person name="Trask B."/>
            <person name="Vacherie B."/>
            <person name="Bellemere C."/>
            <person name="Belser C."/>
            <person name="Besnard-Gonnet M."/>
            <person name="Bartol-Mavel D."/>
            <person name="Boutard M."/>
            <person name="Briez-Silla S."/>
            <person name="Combette S."/>
            <person name="Dufosse-Laurent V."/>
            <person name="Ferron C."/>
            <person name="Lechaplais C."/>
            <person name="Louesse C."/>
            <person name="Muselet D."/>
            <person name="Magdelenat G."/>
            <person name="Pateau E."/>
            <person name="Petit E."/>
            <person name="Sirvain-Trukniewicz P."/>
            <person name="Trybou A."/>
            <person name="Vega-Czarny N."/>
            <person name="Bataille E."/>
            <person name="Bluet E."/>
            <person name="Bordelais I."/>
            <person name="Dubois M."/>
            <person name="Dumont C."/>
            <person name="Guerin T."/>
            <person name="Haffray S."/>
            <person name="Hammadi R."/>
            <person name="Muanga J."/>
            <person name="Pellouin V."/>
            <person name="Robert D."/>
            <person name="Wunderle E."/>
            <person name="Gauguet G."/>
            <person name="Roy A."/>
            <person name="Sainte-Marthe L."/>
            <person name="Verdier J."/>
            <person name="Verdier-Discala C."/>
            <person name="Hillier L.W."/>
            <person name="Fulton L."/>
            <person name="McPherson J."/>
            <person name="Matsuda F."/>
            <person name="Wilson R."/>
            <person name="Scarpelli C."/>
            <person name="Gyapay G."/>
            <person name="Wincker P."/>
            <person name="Saurin W."/>
            <person name="Quetier F."/>
            <person name="Waterston R."/>
            <person name="Hood L."/>
            <person name="Weissenbach J."/>
        </authorList>
    </citation>
    <scope>NUCLEOTIDE SEQUENCE [LARGE SCALE GENOMIC DNA]</scope>
</reference>
<reference key="5">
    <citation type="submission" date="2005-09" db="EMBL/GenBank/DDBJ databases">
        <authorList>
            <person name="Mural R.J."/>
            <person name="Istrail S."/>
            <person name="Sutton G.G."/>
            <person name="Florea L."/>
            <person name="Halpern A.L."/>
            <person name="Mobarry C.M."/>
            <person name="Lippert R."/>
            <person name="Walenz B."/>
            <person name="Shatkay H."/>
            <person name="Dew I."/>
            <person name="Miller J.R."/>
            <person name="Flanigan M.J."/>
            <person name="Edwards N.J."/>
            <person name="Bolanos R."/>
            <person name="Fasulo D."/>
            <person name="Halldorsson B.V."/>
            <person name="Hannenhalli S."/>
            <person name="Turner R."/>
            <person name="Yooseph S."/>
            <person name="Lu F."/>
            <person name="Nusskern D.R."/>
            <person name="Shue B.C."/>
            <person name="Zheng X.H."/>
            <person name="Zhong F."/>
            <person name="Delcher A.L."/>
            <person name="Huson D.H."/>
            <person name="Kravitz S.A."/>
            <person name="Mouchard L."/>
            <person name="Reinert K."/>
            <person name="Remington K.A."/>
            <person name="Clark A.G."/>
            <person name="Waterman M.S."/>
            <person name="Eichler E.E."/>
            <person name="Adams M.D."/>
            <person name="Hunkapiller M.W."/>
            <person name="Myers E.W."/>
            <person name="Venter J.C."/>
        </authorList>
    </citation>
    <scope>NUCLEOTIDE SEQUENCE [LARGE SCALE GENOMIC DNA]</scope>
</reference>
<reference key="6">
    <citation type="journal article" date="2004" name="Genome Res.">
        <title>The status, quality, and expansion of the NIH full-length cDNA project: the Mammalian Gene Collection (MGC).</title>
        <authorList>
            <consortium name="The MGC Project Team"/>
        </authorList>
    </citation>
    <scope>NUCLEOTIDE SEQUENCE [LARGE SCALE MRNA] (ISOFORMS 1 AND 3)</scope>
    <source>
        <tissue>Embryonic stem cell</tissue>
        <tissue>Hypothalamus</tissue>
        <tissue>Skin</tissue>
    </source>
</reference>
<reference key="7">
    <citation type="submission" date="2003-02" db="EMBL/GenBank/DDBJ databases">
        <title>Full-length cDNA libraries and normalization.</title>
        <authorList>
            <person name="Li W.B."/>
            <person name="Gruber C."/>
            <person name="Jessee J."/>
            <person name="Polayes D."/>
        </authorList>
    </citation>
    <scope>NUCLEOTIDE SEQUENCE [LARGE SCALE MRNA] OF 3-203 (ISOFORM 2)</scope>
    <source>
        <tissue>Cervix carcinoma</tissue>
    </source>
</reference>
<reference key="8">
    <citation type="journal article" date="1994" name="Science">
        <title>cDNA cloning and interferon gamma down-regulation of proteasomal subunits X and Y.</title>
        <authorList>
            <person name="Akiyama K.-Y."/>
            <person name="Yokota K.-Y."/>
            <person name="Kagawa S."/>
            <person name="Shimbara N."/>
            <person name="Tamura T."/>
            <person name="Akioka H."/>
            <person name="Nothwang H.G."/>
            <person name="Noda C."/>
            <person name="Tanaka K."/>
            <person name="Ichihara A."/>
        </authorList>
    </citation>
    <scope>NUCLEOTIDE SEQUENCE [MRNA] OF 3-263 (ISOFORM 1)</scope>
    <scope>INDUCTION</scope>
</reference>
<reference key="9">
    <citation type="journal article" date="1994" name="Curr. Biol.">
        <title>Proteasome components with reciprocal expression to that of the MHC-encoded LMP proteins.</title>
        <authorList>
            <person name="Belich M.P."/>
            <person name="Glynne R.J."/>
            <person name="Senger G."/>
            <person name="Sheer D."/>
            <person name="Trowsdale J."/>
        </authorList>
    </citation>
    <scope>NUCLEOTIDE SEQUENCE [MRNA] OF 49-263 (ISOFORM 1)</scope>
</reference>
<reference key="10">
    <citation type="submission" date="2003-05" db="EMBL/GenBank/DDBJ databases">
        <title>Cloning of human full-length CDSs in BD Creator(TM) system donor vector.</title>
        <authorList>
            <person name="Kalnine N."/>
            <person name="Chen X."/>
            <person name="Rolfs A."/>
            <person name="Halleck A."/>
            <person name="Hines L."/>
            <person name="Eisenstein S."/>
            <person name="Koundinya M."/>
            <person name="Raphael J."/>
            <person name="Moreira D."/>
            <person name="Kelley T."/>
            <person name="LaBaer J."/>
            <person name="Lin Y."/>
            <person name="Phelan M."/>
            <person name="Farmer A."/>
        </authorList>
    </citation>
    <scope>NUCLEOTIDE SEQUENCE [LARGE SCALE MRNA] OF 56-263 (ISOFORM 1)</scope>
</reference>
<reference key="11">
    <citation type="journal article" date="1990" name="Biochim. Biophys. Acta">
        <title>Relationships among the subunits of the high molecular weight proteinase, macropain (proteasome).</title>
        <authorList>
            <person name="Lee L.W."/>
            <person name="Moomaw C.R."/>
            <person name="Orth K."/>
            <person name="McGuire M.J."/>
            <person name="DeMartino G.N."/>
            <person name="Slaughter C.A."/>
        </authorList>
    </citation>
    <scope>PROTEIN SEQUENCE OF 60-85</scope>
</reference>
<reference key="12">
    <citation type="journal article" date="1994" name="Biochem. Biophys. Res. Commun.">
        <title>Human proteasome subunits from 2-dimensional gels identified by partial sequencing.</title>
        <authorList>
            <person name="Kristensen P."/>
            <person name="Johnsen A.H."/>
            <person name="Uerkvitz W."/>
            <person name="Tanaka K."/>
            <person name="Hendil K.B."/>
        </authorList>
    </citation>
    <scope>PROTEIN SEQUENCE OF 201-216 AND 226-239</scope>
</reference>
<reference key="13">
    <citation type="journal article" date="1994" name="FEBS Lett.">
        <title>Replacement of proteasome subunits X and Y by LMP7 and LMP2 induced by interferon-gamma for acquirement of the functional diversity responsible for antigen processing.</title>
        <authorList>
            <person name="Akiyama K."/>
            <person name="Kagawa S."/>
            <person name="Tamura T."/>
            <person name="Shimbara N."/>
            <person name="Takashina M."/>
            <person name="Kristensen P."/>
            <person name="Hendil K.B."/>
            <person name="Tanaka K."/>
            <person name="Ichihara A."/>
        </authorList>
    </citation>
    <scope>PROTEIN SEQUENCE OF 201-216</scope>
    <scope>SUBUNIT</scope>
    <source>
        <tissue>Kidney</tissue>
    </source>
</reference>
<reference key="14">
    <citation type="journal article" date="1995" name="Biochem. Biophys. Res. Commun.">
        <authorList>
            <person name="Kristensen P."/>
            <person name="Johnsen A.H."/>
            <person name="Uerkvitz W."/>
            <person name="Tanaka K."/>
            <person name="Hendil K.B."/>
        </authorList>
    </citation>
    <scope>ERRATUM OF PUBMED:8163024</scope>
</reference>
<reference key="15">
    <citation type="journal article" date="1996" name="J. Biol. Chem.">
        <title>Proteasome subunits X and Y alter peptidase activities in opposite ways to the interferon-gamma-induced subunits LMP2 and LMP7.</title>
        <authorList>
            <person name="Gaczynska M."/>
            <person name="Goldberg A.L."/>
            <person name="Tanaka K."/>
            <person name="Hendil K.B."/>
            <person name="Rock K.L."/>
        </authorList>
    </citation>
    <scope>INDUCTION</scope>
</reference>
<reference key="16">
    <citation type="journal article" date="1996" name="Nature">
        <title>A role for the proteasome regulator PA28alpha in antigen presentation.</title>
        <authorList>
            <person name="Groettrup M."/>
            <person name="Soza A."/>
            <person name="Eggers M."/>
            <person name="Kuehn L."/>
            <person name="Dick T.P."/>
            <person name="Schild H."/>
            <person name="Rammensee H.G."/>
            <person name="Koszinowski U.H."/>
            <person name="Kloetzel P.M."/>
        </authorList>
    </citation>
    <scope>FUNCTION IN ANTIGEN PRESENTATION</scope>
</reference>
<reference key="17">
    <citation type="journal article" date="2002" name="Mol. Biol. Cell">
        <title>Clastosome: a subtype of nuclear body enriched in 19S and 20S proteasomes, ubiquitin, and protein substrates of proteasome.</title>
        <authorList>
            <person name="Lafarga M."/>
            <person name="Berciano M.T."/>
            <person name="Pena E."/>
            <person name="Mayo I."/>
            <person name="Castano J.G."/>
            <person name="Bohmann D."/>
            <person name="Rodrigues J.P."/>
            <person name="Tavanez J.P."/>
            <person name="Carmo-Fonseca M."/>
        </authorList>
    </citation>
    <scope>SUBCELLULAR LOCATION</scope>
</reference>
<reference key="18">
    <citation type="journal article" date="2003" name="FEBS Lett.">
        <title>Human immunodeficiency virus-1 Tat protein interacts with distinct proteasomal alpha and beta subunits.</title>
        <authorList>
            <person name="Apcher G.S."/>
            <person name="Heink S."/>
            <person name="Zantopf D."/>
            <person name="Kloetzel P.-M."/>
            <person name="Schmid H.-P."/>
            <person name="Mayer R.J."/>
            <person name="Krueger E."/>
        </authorList>
    </citation>
    <scope>INTERACTION WITH HIV-1 TAT (MICROBIAL INFECTION)</scope>
</reference>
<reference key="19">
    <citation type="journal article" date="2004" name="Biomacromolecules">
        <title>20S proteasome prevents aggregation of heat-denatured proteins without PA700 regulatory subcomplex like a molecular chaperone.</title>
        <authorList>
            <person name="Yano M."/>
            <person name="Koumoto Y."/>
            <person name="Kanesaki Y."/>
            <person name="Wu X."/>
            <person name="Kido H."/>
        </authorList>
    </citation>
    <scope>FUNCTION</scope>
</reference>
<reference key="20">
    <citation type="journal article" date="2005" name="Mol. Immunol.">
        <title>Cytoplasmic domains of the transporter associated with antigen processing and P-glycoprotein interact with subunits of the proteasome.</title>
        <authorList>
            <person name="Begley G.S."/>
            <person name="Horvath A.R."/>
            <person name="Taylor J.C."/>
            <person name="Higgins C.F."/>
        </authorList>
    </citation>
    <scope>INTERACTION WITH ABCB1 AND TAP1</scope>
</reference>
<reference key="21">
    <citation type="journal article" date="2005" name="Proc. Natl. Acad. Sci. U.S.A.">
        <title>IFN-gamma-induced immune adaptation of the proteasome system is an accelerated and transient response.</title>
        <authorList>
            <person name="Heink S."/>
            <person name="Ludwig D."/>
            <person name="Kloetzel P.-M."/>
            <person name="Krueger E."/>
        </authorList>
    </citation>
    <scope>INTERACTION WITH POMP</scope>
</reference>
<reference key="22">
    <citation type="journal article" date="2007" name="Biochemistry">
        <title>Mass spectrometric characterization of the affinity-purified human 26S proteasome complex.</title>
        <authorList>
            <person name="Wang X."/>
            <person name="Chen C.-F."/>
            <person name="Baker P.R."/>
            <person name="Chen P.-L."/>
            <person name="Kaiser P."/>
            <person name="Huang L."/>
        </authorList>
    </citation>
    <scope>IDENTIFICATION BY MASS SPECTROMETRY [LARGE SCALE ANALYSIS]</scope>
    <source>
        <tissue>Embryonic kidney</tissue>
    </source>
</reference>
<reference key="23">
    <citation type="journal article" date="2007" name="Breast Cancer Res. Treat.">
        <title>Over-expression of genes and proteins of ubiquitin specific peptidases (USPs) and proteasome subunits (PSs) in breast cancer tissue observed by the methods of RFDD-PCR and proteomics.</title>
        <authorList>
            <person name="Deng S."/>
            <person name="Zhou H."/>
            <person name="Xiong R."/>
            <person name="Lu Y."/>
            <person name="Yan D."/>
            <person name="Xing T."/>
            <person name="Dong L."/>
            <person name="Tang E."/>
            <person name="Yang H."/>
        </authorList>
    </citation>
    <scope>INDUCTION</scope>
</reference>
<reference key="24">
    <citation type="journal article" date="2008" name="Blood">
        <title>Molecular basis of bortezomib resistance: proteasome subunit beta5 (PSMB5) gene mutation and overexpression of PSMB5 protein.</title>
        <authorList>
            <person name="Oerlemans R."/>
            <person name="Franke N.E."/>
            <person name="Assaraf Y.G."/>
            <person name="Cloos J."/>
            <person name="van Zantwijk I."/>
            <person name="Berkers C.R."/>
            <person name="Scheffer G.L."/>
            <person name="Debipersad K."/>
            <person name="Vojtekova K."/>
            <person name="Lemos C."/>
            <person name="van der Heijden J.W."/>
            <person name="Ylstra B."/>
            <person name="Peters G.J."/>
            <person name="Kaspers G.L."/>
            <person name="Dijkmans B.A."/>
            <person name="Scheper R.J."/>
            <person name="Jansen G."/>
        </authorList>
    </citation>
    <scope>FUNCTION</scope>
    <scope>MUTAGENESIS OF ALA-108</scope>
</reference>
<reference key="25">
    <citation type="journal article" date="2008" name="J. Pharmacol. Exp. Ther.">
        <title>Point mutation of the proteasome beta5 subunit gene is an important mechanism of bortezomib resistance in bortezomib-selected variants of Jurkat T cell lymphoblastic lymphoma/leukemia line.</title>
        <authorList>
            <person name="Lue S."/>
            <person name="Yang J."/>
            <person name="Song X."/>
            <person name="Gong S."/>
            <person name="Zhou H."/>
            <person name="Guo L."/>
            <person name="Song N."/>
            <person name="Bao X."/>
            <person name="Chen P."/>
            <person name="Wang J."/>
        </authorList>
    </citation>
    <scope>FUNCTION</scope>
    <scope>MUTAGENESIS OF ALA-108</scope>
</reference>
<reference key="26">
    <citation type="journal article" date="2009" name="Exp. Hematol.">
        <title>Different mutants of PSMB5 confer varying bortezomib resistance in T lymphoblastic lymphoma/leukemia cells derived from the Jurkat cell line.</title>
        <authorList>
            <person name="Lue S."/>
            <person name="Yang J."/>
            <person name="Chen Z."/>
            <person name="Gong S."/>
            <person name="Zhou H."/>
            <person name="Xu X."/>
            <person name="Wang J."/>
        </authorList>
    </citation>
    <scope>MUTAGENESIS OF ALA-108 AND ALA-109</scope>
</reference>
<reference key="27">
    <citation type="journal article" date="2009" name="J. Nutr. Biochem.">
        <title>Regulation of estrogen receptor alpha expression in human breast cancer cells by sulforaphane.</title>
        <authorList>
            <person name="Ramirez M.C."/>
            <person name="Singletary K."/>
        </authorList>
    </citation>
    <scope>INDUCTION BY SULFORAPHANE</scope>
</reference>
<reference key="28">
    <citation type="journal article" date="2011" name="BMC Syst. Biol.">
        <title>Initial characterization of the human central proteome.</title>
        <authorList>
            <person name="Burkard T.R."/>
            <person name="Planyavsky M."/>
            <person name="Kaupe I."/>
            <person name="Breitwieser F.P."/>
            <person name="Buerckstuemmer T."/>
            <person name="Bennett K.L."/>
            <person name="Superti-Furga G."/>
            <person name="Colinge J."/>
        </authorList>
    </citation>
    <scope>IDENTIFICATION BY MASS SPECTROMETRY [LARGE SCALE ANALYSIS]</scope>
</reference>
<reference key="29">
    <citation type="journal article" date="2013" name="Annu. Rev. Biochem.">
        <title>Molecular architecture and assembly of the eukaryotic proteasome.</title>
        <authorList>
            <person name="Tomko R.J. Jr."/>
            <person name="Hochstrasser M."/>
        </authorList>
    </citation>
    <scope>NOMENCLATURE</scope>
</reference>
<reference key="30">
    <citation type="journal article" date="2014" name="J. Proteomics">
        <title>An enzyme assisted RP-RPLC approach for in-depth analysis of human liver phosphoproteome.</title>
        <authorList>
            <person name="Bian Y."/>
            <person name="Song C."/>
            <person name="Cheng K."/>
            <person name="Dong M."/>
            <person name="Wang F."/>
            <person name="Huang J."/>
            <person name="Sun D."/>
            <person name="Wang L."/>
            <person name="Ye M."/>
            <person name="Zou H."/>
        </authorList>
    </citation>
    <scope>IDENTIFICATION BY MASS SPECTROMETRY [LARGE SCALE ANALYSIS]</scope>
    <source>
        <tissue>Liver</tissue>
    </source>
</reference>
<reference key="31">
    <citation type="journal article" date="2016" name="Biol. Chem.">
        <title>Human 20S proteasome activity towards fluorogenic peptides of various chain lengths.</title>
        <authorList>
            <person name="Rut W."/>
            <person name="Drag M."/>
        </authorList>
    </citation>
    <scope>FUNCTION</scope>
    <scope>CATALYTIC ACTIVITY</scope>
</reference>
<reference key="32">
    <citation type="journal article" date="2015" name="Nat. Commun.">
        <title>Cryo-EM reveals the conformation of a substrate analogue in the human 20S proteasome core.</title>
        <authorList>
            <person name="da Fonseca P.C."/>
            <person name="Morris E.P."/>
        </authorList>
    </citation>
    <scope>STRUCTURE BY ELECTRON MICROSCOPY (3.50 ANGSTROMS)</scope>
    <scope>SUBUNIT</scope>
</reference>
<reference key="33">
    <citation type="journal article" date="2015" name="Structure">
        <title>Crystal structure of the human 20S proteasome in complex with carfilzomib.</title>
        <authorList>
            <person name="Harshbarger W."/>
            <person name="Miller C."/>
            <person name="Diedrich C."/>
            <person name="Sacchettini J."/>
        </authorList>
    </citation>
    <scope>X-RAY CRYSTALLOGRAPHY (2.60 ANGSTROMS) OF 60-260</scope>
    <scope>SUBUNIT</scope>
    <scope>ACTIVE SITE</scope>
</reference>
<reference key="34">
    <citation type="journal article" date="2016" name="Nat. Struct. Mol. Biol.">
        <title>An atomic structure of the human 26S proteasome.</title>
        <authorList>
            <person name="Huang X."/>
            <person name="Luan B."/>
            <person name="Wu J."/>
            <person name="Shi Y."/>
        </authorList>
    </citation>
    <scope>STRUCTURE BY ELECTRON MICROSCOPY (3.50 ANGSTROMS)</scope>
    <scope>SUBUNIT</scope>
</reference>
<reference key="35">
    <citation type="journal article" date="2016" name="Proc. Natl. Acad. Sci. U.S.A.">
        <title>Structure of the human 26S proteasome at a resolution of 3.9 Aa.</title>
        <authorList>
            <person name="Schweitzer A."/>
            <person name="Aufderheide A."/>
            <person name="Rudack T."/>
            <person name="Beck F."/>
            <person name="Pfeifer G."/>
            <person name="Plitzko J.M."/>
            <person name="Sakata E."/>
            <person name="Schulten K."/>
            <person name="Foerster F."/>
            <person name="Baumeister W."/>
        </authorList>
    </citation>
    <scope>STRUCTURE BY ELECTRON MICROSCOPY (4.02 ANGSTROMS)</scope>
    <scope>SUBUNIT</scope>
</reference>
<reference key="36">
    <citation type="journal article" date="2016" name="Science">
        <title>The inhibition mechanism of human 20S proteasomes enables next-generation inhibitor design.</title>
        <authorList>
            <person name="Schrader J."/>
            <person name="Henneberg F."/>
            <person name="Mata R.A."/>
            <person name="Tittmann K."/>
            <person name="Schneider T.R."/>
            <person name="Stark H."/>
            <person name="Bourenkov G."/>
            <person name="Chari A."/>
        </authorList>
    </citation>
    <scope>X-RAY CRYSTALLOGRAPHY (1.80 ANGSTROMS)</scope>
    <scope>SUBUNIT</scope>
    <scope>ACTIVE SITE</scope>
</reference>
<reference key="37">
    <citation type="journal article" date="2021" name="Nature">
        <title>AKIRIN2 controls the nuclear import of proteasomes in vertebrates.</title>
        <authorList>
            <person name="de Almeida M."/>
            <person name="Hinterndorfer M."/>
            <person name="Brunner H."/>
            <person name="Grishkovskaya I."/>
            <person name="Singh K."/>
            <person name="Schleiffer A."/>
            <person name="Jude J."/>
            <person name="Deswal S."/>
            <person name="Kalis R."/>
            <person name="Vunjak M."/>
            <person name="Lendl T."/>
            <person name="Imre R."/>
            <person name="Roitinger E."/>
            <person name="Neumann T."/>
            <person name="Kandolf S."/>
            <person name="Schutzbier M."/>
            <person name="Mechtler K."/>
            <person name="Versteeg G.A."/>
            <person name="Haselbach D."/>
            <person name="Zuber J."/>
        </authorList>
    </citation>
    <scope>STRUCTURE BY ELECTRON MICROSCOPY (2.80 ANGSTROMS) IN COMPLEX WITH AKIRIN2</scope>
    <scope>SUBUNIT</scope>
    <scope>SUBCELLULAR LOCATION</scope>
</reference>
<proteinExistence type="evidence at protein level"/>
<comment type="function">
    <text evidence="4 8 9 15 22">Component of the 20S core proteasome complex involved in the proteolytic degradation of most intracellular proteins. This complex plays numerous essential roles within the cell by associating with different regulatory particles. Associated with two 19S regulatory particles, forms the 26S proteasome and thus participates in the ATP-dependent degradation of ubiquitinated proteins. The 26S proteasome plays a key role in the maintenance of protein homeostasis by removing misfolded or damaged proteins that could impair cellular functions, and by removing proteins whose functions are no longer required. Associated with the PA200 or PA28, the 20S proteasome mediates ubiquitin-independent protein degradation. This type of proteolysis is required in several pathways including spermatogenesis (20S-PA200 complex) or generation of a subset of MHC class I-presented antigenic peptides (20S-PA28 complex). Within the 20S core complex, PSMB5 displays a chymotrypsin-like activity.</text>
</comment>
<comment type="catalytic activity">
    <reaction evidence="15">
        <text>Cleavage of peptide bonds with very broad specificity.</text>
        <dbReference type="EC" id="3.4.25.1"/>
    </reaction>
</comment>
<comment type="subunit">
    <text evidence="5 6 13 14 16 17 18 19 21">The 26S proteasome consists of a 20S proteasome core and two 19S regulatory subunits (PubMed:25599644, PubMed:26133119, PubMed:27342858, PubMed:27428775, PubMed:27493187, PubMed:34711951, PubMed:8163024). The 20S proteasome core is a barrel-shaped complex made of 28 subunits that are arranged in four stacked rings (PubMed:25599644, PubMed:26133119, PubMed:27342858, PubMed:27428775, PubMed:27493187, PubMed:34711951, PubMed:8163024). The two outer rings are each formed by seven alpha subunits, and the two inner rings are formed by seven beta subunits (PubMed:25599644, PubMed:26133119, PubMed:27342858, PubMed:27428775, PubMed:27493187, PubMed:34711951, PubMed:8163024). The proteolytic activity is exerted by three beta-subunits PSMB5, PSMB6 and PSMB7 (PubMed:25599644, PubMed:26133119, PubMed:27342858, PubMed:27428775, PubMed:27493187, PubMed:34711951, PubMed:8163024). Directly interacts with POMP (PubMed:15944226). Interacts with ABCB1 and TAP1 (PubMed:15488952).</text>
</comment>
<comment type="subunit">
    <text evidence="3">(Microbial infection) Interacts with HIV-1 TAT protein.</text>
</comment>
<comment type="interaction">
    <interactant intactId="EBI-357828">
        <id>P28074</id>
    </interactant>
    <interactant intactId="EBI-2949658">
        <id>O95429</id>
        <label>BAG4</label>
    </interactant>
    <organismsDiffer>false</organismsDiffer>
    <experiments>5</experiments>
</comment>
<comment type="interaction">
    <interactant intactId="EBI-357828">
        <id>P28074</id>
    </interactant>
    <interactant intactId="EBI-12235840">
        <id>Q8NCX0-3</id>
        <label>CCDC150</label>
    </interactant>
    <organismsDiffer>false</organismsDiffer>
    <experiments>3</experiments>
</comment>
<comment type="interaction">
    <interactant intactId="EBI-357828">
        <id>P28074</id>
    </interactant>
    <interactant intactId="EBI-2559831">
        <id>Q92989</id>
        <label>CLP1</label>
    </interactant>
    <organismsDiffer>false</organismsDiffer>
    <experiments>3</experiments>
</comment>
<comment type="interaction">
    <interactant intactId="EBI-357828">
        <id>P28074</id>
    </interactant>
    <interactant intactId="EBI-1054321">
        <id>Q68J44</id>
        <label>DUSP29</label>
    </interactant>
    <organismsDiffer>false</organismsDiffer>
    <experiments>3</experiments>
</comment>
<comment type="interaction">
    <interactant intactId="EBI-357828">
        <id>P28074</id>
    </interactant>
    <interactant intactId="EBI-81279">
        <id>Q9Y6K9</id>
        <label>IKBKG</label>
    </interactant>
    <organismsDiffer>false</organismsDiffer>
    <experiments>3</experiments>
</comment>
<comment type="interaction">
    <interactant intactId="EBI-357828">
        <id>P28074</id>
    </interactant>
    <interactant intactId="EBI-347619">
        <id>O15116</id>
        <label>LSM1</label>
    </interactant>
    <organismsDiffer>false</organismsDiffer>
    <experiments>4</experiments>
</comment>
<comment type="interaction">
    <interactant intactId="EBI-357828">
        <id>P28074</id>
    </interactant>
    <interactant intactId="EBI-741158">
        <id>Q96HA8</id>
        <label>NTAQ1</label>
    </interactant>
    <organismsDiffer>false</organismsDiffer>
    <experiments>3</experiments>
</comment>
<comment type="interaction">
    <interactant intactId="EBI-357828">
        <id>P28074</id>
    </interactant>
    <interactant intactId="EBI-696895">
        <id>Q9Y244</id>
        <label>POMP</label>
    </interactant>
    <organismsDiffer>false</organismsDiffer>
    <experiments>4</experiments>
</comment>
<comment type="interaction">
    <interactant intactId="EBI-357828">
        <id>P28074</id>
    </interactant>
    <interactant intactId="EBI-372273">
        <id>P20618</id>
        <label>PSMB1</label>
    </interactant>
    <organismsDiffer>false</organismsDiffer>
    <experiments>7</experiments>
</comment>
<comment type="interaction">
    <interactant intactId="EBI-357828">
        <id>P28074</id>
    </interactant>
    <interactant intactId="EBI-359335">
        <id>P49721</id>
        <label>PSMB2</label>
    </interactant>
    <organismsDiffer>false</organismsDiffer>
    <experiments>5</experiments>
</comment>
<comment type="interaction">
    <interactant intactId="EBI-357828">
        <id>P28074</id>
    </interactant>
    <interactant intactId="EBI-603340">
        <id>P49720</id>
        <label>PSMB3</label>
    </interactant>
    <organismsDiffer>false</organismsDiffer>
    <experiments>6</experiments>
</comment>
<comment type="interaction">
    <interactant intactId="EBI-357828">
        <id>P28074</id>
    </interactant>
    <interactant intactId="EBI-603350">
        <id>P28070</id>
        <label>PSMB4</label>
    </interactant>
    <organismsDiffer>false</organismsDiffer>
    <experiments>4</experiments>
</comment>
<comment type="interaction">
    <interactant intactId="EBI-357828">
        <id>P28074</id>
    </interactant>
    <interactant intactId="EBI-603319">
        <id>Q99436</id>
        <label>PSMB7</label>
    </interactant>
    <organismsDiffer>false</organismsDiffer>
    <experiments>10</experiments>
</comment>
<comment type="interaction">
    <interactant intactId="EBI-357828">
        <id>P28074</id>
    </interactant>
    <interactant intactId="EBI-740781">
        <id>Q9BT92</id>
        <label>TCHP</label>
    </interactant>
    <organismsDiffer>false</organismsDiffer>
    <experiments>3</experiments>
</comment>
<comment type="subcellular location">
    <subcellularLocation>
        <location evidence="2 19">Cytoplasm</location>
    </subcellularLocation>
    <subcellularLocation>
        <location evidence="2 19">Nucleus</location>
    </subcellularLocation>
    <text evidence="19">Translocated from the cytoplasm into the nucleus following interaction with AKIRIN2, which bridges the proteasome with the nuclear import receptor IPO9.</text>
</comment>
<comment type="alternative products">
    <event type="alternative splicing"/>
    <isoform>
        <id>P28074-1</id>
        <name>1</name>
        <sequence type="displayed"/>
    </isoform>
    <isoform>
        <id>P28074-2</id>
        <name>2</name>
        <sequence type="described" ref="VSP_041263"/>
    </isoform>
    <isoform>
        <id>P28074-3</id>
        <name>3</name>
        <sequence type="described" ref="VSP_045686"/>
    </isoform>
</comment>
<comment type="induction">
    <text evidence="7 10 20 23">Down-regulated by IFNG/IFN-gamma (at protein level). Induced in breast cancer tissue. Up-regulated by sulforaphane in breast cancer cells.</text>
</comment>
<comment type="similarity">
    <text evidence="1">Belongs to the peptidase T1B family.</text>
</comment>
<comment type="sequence caution" evidence="28">
    <conflict type="erroneous initiation">
        <sequence resource="EMBL-CDS" id="AAP35423"/>
    </conflict>
</comment>
<comment type="sequence caution" evidence="28">
    <conflict type="erroneous initiation">
        <sequence resource="EMBL-CDS" id="BAA06097"/>
    </conflict>
</comment>
<comment type="sequence caution" evidence="28">
    <conflict type="erroneous initiation">
        <sequence resource="EMBL-CDS" id="CAD97956"/>
    </conflict>
</comment>
<organism>
    <name type="scientific">Homo sapiens</name>
    <name type="common">Human</name>
    <dbReference type="NCBI Taxonomy" id="9606"/>
    <lineage>
        <taxon>Eukaryota</taxon>
        <taxon>Metazoa</taxon>
        <taxon>Chordata</taxon>
        <taxon>Craniata</taxon>
        <taxon>Vertebrata</taxon>
        <taxon>Euteleostomi</taxon>
        <taxon>Mammalia</taxon>
        <taxon>Eutheria</taxon>
        <taxon>Euarchontoglires</taxon>
        <taxon>Primates</taxon>
        <taxon>Haplorrhini</taxon>
        <taxon>Catarrhini</taxon>
        <taxon>Hominidae</taxon>
        <taxon>Homo</taxon>
    </lineage>
</organism>
<keyword id="KW-0002">3D-structure</keyword>
<keyword id="KW-0025">Alternative splicing</keyword>
<keyword id="KW-0963">Cytoplasm</keyword>
<keyword id="KW-0903">Direct protein sequencing</keyword>
<keyword id="KW-0945">Host-virus interaction</keyword>
<keyword id="KW-0378">Hydrolase</keyword>
<keyword id="KW-0539">Nucleus</keyword>
<keyword id="KW-0645">Protease</keyword>
<keyword id="KW-0647">Proteasome</keyword>
<keyword id="KW-1267">Proteomics identification</keyword>
<keyword id="KW-1185">Reference proteome</keyword>
<keyword id="KW-0888">Threonine protease</keyword>
<keyword id="KW-0865">Zymogen</keyword>
<accession>P28074</accession>
<accession>B2R4N9</accession>
<accession>B4DUM9</accession>
<accession>D3DS43</accession>
<accession>E9PAV2</accession>
<accession>Q16242</accession>
<accession>Q6PEW2</accession>
<accession>Q7Z3B5</accession>
<accession>Q86T01</accession>
<accession>Q9TNN9</accession>
<dbReference type="EC" id="3.4.25.1" evidence="15"/>
<dbReference type="EMBL" id="X95586">
    <property type="protein sequence ID" value="CAA64838.1"/>
    <property type="molecule type" value="Genomic_DNA"/>
</dbReference>
<dbReference type="EMBL" id="AK300714">
    <property type="protein sequence ID" value="BAG62391.1"/>
    <property type="molecule type" value="mRNA"/>
</dbReference>
<dbReference type="EMBL" id="AK311895">
    <property type="protein sequence ID" value="BAG34836.1"/>
    <property type="molecule type" value="mRNA"/>
</dbReference>
<dbReference type="EMBL" id="BX538001">
    <property type="protein sequence ID" value="CAD97956.1"/>
    <property type="status" value="ALT_INIT"/>
    <property type="molecule type" value="mRNA"/>
</dbReference>
<dbReference type="EMBL" id="AL132780">
    <property type="status" value="NOT_ANNOTATED_CDS"/>
    <property type="molecule type" value="Genomic_DNA"/>
</dbReference>
<dbReference type="EMBL" id="CH471078">
    <property type="protein sequence ID" value="EAW66193.1"/>
    <property type="molecule type" value="Genomic_DNA"/>
</dbReference>
<dbReference type="EMBL" id="CH471078">
    <property type="protein sequence ID" value="EAW66195.1"/>
    <property type="molecule type" value="Genomic_DNA"/>
</dbReference>
<dbReference type="EMBL" id="BC004146">
    <property type="status" value="NOT_ANNOTATED_CDS"/>
    <property type="molecule type" value="mRNA"/>
</dbReference>
<dbReference type="EMBL" id="BC057840">
    <property type="protein sequence ID" value="AAH57840.1"/>
    <property type="molecule type" value="mRNA"/>
</dbReference>
<dbReference type="EMBL" id="BC107720">
    <property type="protein sequence ID" value="AAI07721.1"/>
    <property type="molecule type" value="mRNA"/>
</dbReference>
<dbReference type="EMBL" id="CD048996">
    <property type="status" value="NOT_ANNOTATED_CDS"/>
    <property type="molecule type" value="mRNA"/>
</dbReference>
<dbReference type="EMBL" id="BX248299">
    <property type="protein sequence ID" value="CAD62626.1"/>
    <property type="molecule type" value="mRNA"/>
</dbReference>
<dbReference type="EMBL" id="D29011">
    <property type="protein sequence ID" value="BAA06097.1"/>
    <property type="status" value="ALT_INIT"/>
    <property type="molecule type" value="mRNA"/>
</dbReference>
<dbReference type="EMBL" id="S74378">
    <property type="protein sequence ID" value="AAB33092.1"/>
    <property type="molecule type" value="mRNA"/>
</dbReference>
<dbReference type="EMBL" id="BT006777">
    <property type="protein sequence ID" value="AAP35423.1"/>
    <property type="status" value="ALT_INIT"/>
    <property type="molecule type" value="mRNA"/>
</dbReference>
<dbReference type="CCDS" id="CCDS45083.1">
    <molecule id="P28074-3"/>
</dbReference>
<dbReference type="CCDS" id="CCDS45084.1">
    <molecule id="P28074-2"/>
</dbReference>
<dbReference type="CCDS" id="CCDS9584.1">
    <molecule id="P28074-1"/>
</dbReference>
<dbReference type="PIR" id="A54589">
    <property type="entry name" value="A54589"/>
</dbReference>
<dbReference type="PIR" id="I52906">
    <property type="entry name" value="I52906"/>
</dbReference>
<dbReference type="PIR" id="PC2328">
    <property type="entry name" value="PC2328"/>
</dbReference>
<dbReference type="PIR" id="S08189">
    <property type="entry name" value="S08189"/>
</dbReference>
<dbReference type="RefSeq" id="NP_001124197.1">
    <molecule id="P28074-3"/>
    <property type="nucleotide sequence ID" value="NM_001130725.1"/>
</dbReference>
<dbReference type="RefSeq" id="NP_001138404.1">
    <molecule id="P28074-2"/>
    <property type="nucleotide sequence ID" value="NM_001144932.3"/>
</dbReference>
<dbReference type="RefSeq" id="NP_002788.1">
    <molecule id="P28074-1"/>
    <property type="nucleotide sequence ID" value="NM_002797.5"/>
</dbReference>
<dbReference type="PDB" id="4R3O">
    <property type="method" value="X-ray"/>
    <property type="resolution" value="2.60 A"/>
    <property type="chains" value="L/Z=60-260"/>
</dbReference>
<dbReference type="PDB" id="4R67">
    <property type="method" value="X-ray"/>
    <property type="resolution" value="2.89 A"/>
    <property type="chains" value="3/L/Z/n=60-260"/>
</dbReference>
<dbReference type="PDB" id="5A0Q">
    <property type="method" value="EM"/>
    <property type="resolution" value="3.50 A"/>
    <property type="chains" value="L/Z=60-263"/>
</dbReference>
<dbReference type="PDB" id="5GJQ">
    <property type="method" value="EM"/>
    <property type="resolution" value="4.50 A"/>
    <property type="chains" value="e/s=1-263"/>
</dbReference>
<dbReference type="PDB" id="5GJR">
    <property type="method" value="EM"/>
    <property type="resolution" value="3.50 A"/>
    <property type="chains" value="e/s=1-263"/>
</dbReference>
<dbReference type="PDB" id="5L4G">
    <property type="method" value="EM"/>
    <property type="resolution" value="4.02 A"/>
    <property type="chains" value="5/Y=1-263"/>
</dbReference>
<dbReference type="PDB" id="5L5W">
    <property type="method" value="X-ray"/>
    <property type="resolution" value="2.80 A"/>
    <property type="chains" value="K/Y=60-197"/>
</dbReference>
<dbReference type="PDB" id="5L5X">
    <property type="method" value="X-ray"/>
    <property type="resolution" value="2.90 A"/>
    <property type="chains" value="K/Y=60-197"/>
</dbReference>
<dbReference type="PDB" id="5L5Y">
    <property type="method" value="X-ray"/>
    <property type="resolution" value="2.70 A"/>
    <property type="chains" value="K/Y=60-197"/>
</dbReference>
<dbReference type="PDB" id="5L5Z">
    <property type="method" value="X-ray"/>
    <property type="resolution" value="2.70 A"/>
    <property type="chains" value="K/Y=60-197"/>
</dbReference>
<dbReference type="PDB" id="5L60">
    <property type="method" value="X-ray"/>
    <property type="resolution" value="2.70 A"/>
    <property type="chains" value="K/Y=60-197"/>
</dbReference>
<dbReference type="PDB" id="5L61">
    <property type="method" value="X-ray"/>
    <property type="resolution" value="2.80 A"/>
    <property type="chains" value="K/Y=60-193"/>
</dbReference>
<dbReference type="PDB" id="5L62">
    <property type="method" value="X-ray"/>
    <property type="resolution" value="2.80 A"/>
    <property type="chains" value="K/Y=60-197"/>
</dbReference>
<dbReference type="PDB" id="5L63">
    <property type="method" value="X-ray"/>
    <property type="resolution" value="2.70 A"/>
    <property type="chains" value="K/Y=60-197"/>
</dbReference>
<dbReference type="PDB" id="5L64">
    <property type="method" value="X-ray"/>
    <property type="resolution" value="2.70 A"/>
    <property type="chains" value="K/Y=60-197"/>
</dbReference>
<dbReference type="PDB" id="5LE5">
    <property type="method" value="X-ray"/>
    <property type="resolution" value="1.80 A"/>
    <property type="chains" value="K/Y=60-263"/>
</dbReference>
<dbReference type="PDB" id="5LEX">
    <property type="method" value="X-ray"/>
    <property type="resolution" value="2.20 A"/>
    <property type="chains" value="K/Y=60-263"/>
</dbReference>
<dbReference type="PDB" id="5LEY">
    <property type="method" value="X-ray"/>
    <property type="resolution" value="1.90 A"/>
    <property type="chains" value="K/Y=60-263"/>
</dbReference>
<dbReference type="PDB" id="5LEZ">
    <property type="method" value="X-ray"/>
    <property type="resolution" value="2.19 A"/>
    <property type="chains" value="K/Y=60-263"/>
</dbReference>
<dbReference type="PDB" id="5LF0">
    <property type="method" value="X-ray"/>
    <property type="resolution" value="2.41 A"/>
    <property type="chains" value="K/Y=60-263"/>
</dbReference>
<dbReference type="PDB" id="5LF1">
    <property type="method" value="X-ray"/>
    <property type="resolution" value="2.00 A"/>
    <property type="chains" value="K/Y=60-263"/>
</dbReference>
<dbReference type="PDB" id="5LF3">
    <property type="method" value="X-ray"/>
    <property type="resolution" value="2.10 A"/>
    <property type="chains" value="K/Y=60-263"/>
</dbReference>
<dbReference type="PDB" id="5LF4">
    <property type="method" value="X-ray"/>
    <property type="resolution" value="1.99 A"/>
    <property type="chains" value="K/Y=60-263"/>
</dbReference>
<dbReference type="PDB" id="5LF6">
    <property type="method" value="X-ray"/>
    <property type="resolution" value="2.07 A"/>
    <property type="chains" value="K/Y=60-263"/>
</dbReference>
<dbReference type="PDB" id="5LF7">
    <property type="method" value="X-ray"/>
    <property type="resolution" value="2.00 A"/>
    <property type="chains" value="K/Y=60-263"/>
</dbReference>
<dbReference type="PDB" id="5LN3">
    <property type="method" value="EM"/>
    <property type="resolution" value="6.80 A"/>
    <property type="chains" value="5=1-263"/>
</dbReference>
<dbReference type="PDB" id="5M32">
    <property type="method" value="EM"/>
    <property type="resolution" value="3.80 A"/>
    <property type="chains" value="K/Y=60-263"/>
</dbReference>
<dbReference type="PDB" id="5T0C">
    <property type="method" value="EM"/>
    <property type="resolution" value="3.80 A"/>
    <property type="chains" value="AR/BR=2-263"/>
</dbReference>
<dbReference type="PDB" id="5T0G">
    <property type="method" value="EM"/>
    <property type="resolution" value="4.40 A"/>
    <property type="chains" value="R=2-263"/>
</dbReference>
<dbReference type="PDB" id="5T0H">
    <property type="method" value="EM"/>
    <property type="resolution" value="6.80 A"/>
    <property type="chains" value="R=2-263"/>
</dbReference>
<dbReference type="PDB" id="5T0I">
    <property type="method" value="EM"/>
    <property type="resolution" value="8.00 A"/>
    <property type="chains" value="R=2-263"/>
</dbReference>
<dbReference type="PDB" id="5T0J">
    <property type="method" value="EM"/>
    <property type="resolution" value="8.00 A"/>
    <property type="chains" value="R=2-263"/>
</dbReference>
<dbReference type="PDB" id="5VFO">
    <property type="method" value="EM"/>
    <property type="resolution" value="3.50 A"/>
    <property type="chains" value="R/r=60-260"/>
</dbReference>
<dbReference type="PDB" id="5VFP">
    <property type="method" value="EM"/>
    <property type="resolution" value="4.20 A"/>
    <property type="chains" value="R/r=60-260"/>
</dbReference>
<dbReference type="PDB" id="5VFQ">
    <property type="method" value="EM"/>
    <property type="resolution" value="4.20 A"/>
    <property type="chains" value="R/r=60-260"/>
</dbReference>
<dbReference type="PDB" id="5VFR">
    <property type="method" value="EM"/>
    <property type="resolution" value="4.90 A"/>
    <property type="chains" value="R/r=60-260"/>
</dbReference>
<dbReference type="PDB" id="5VFS">
    <property type="method" value="EM"/>
    <property type="resolution" value="3.60 A"/>
    <property type="chains" value="R/r=60-260"/>
</dbReference>
<dbReference type="PDB" id="5VFT">
    <property type="method" value="EM"/>
    <property type="resolution" value="7.00 A"/>
    <property type="chains" value="R/r=60-260"/>
</dbReference>
<dbReference type="PDB" id="5VFU">
    <property type="method" value="EM"/>
    <property type="resolution" value="5.80 A"/>
    <property type="chains" value="R/r=60-260"/>
</dbReference>
<dbReference type="PDB" id="6KWY">
    <property type="method" value="EM"/>
    <property type="resolution" value="2.72 A"/>
    <property type="chains" value="K/Y=1-263"/>
</dbReference>
<dbReference type="PDB" id="6MSB">
    <property type="method" value="EM"/>
    <property type="resolution" value="3.00 A"/>
    <property type="chains" value="R/r=2-263"/>
</dbReference>
<dbReference type="PDB" id="6MSD">
    <property type="method" value="EM"/>
    <property type="resolution" value="3.20 A"/>
    <property type="chains" value="R/r=2-263"/>
</dbReference>
<dbReference type="PDB" id="6MSE">
    <property type="method" value="EM"/>
    <property type="resolution" value="3.30 A"/>
    <property type="chains" value="f=146-201"/>
</dbReference>
<dbReference type="PDB" id="6MSG">
    <property type="method" value="EM"/>
    <property type="resolution" value="3.50 A"/>
    <property type="chains" value="R/r=2-263"/>
</dbReference>
<dbReference type="PDB" id="6MSH">
    <property type="method" value="EM"/>
    <property type="resolution" value="3.60 A"/>
    <property type="chains" value="R/r=2-263"/>
</dbReference>
<dbReference type="PDB" id="6MSJ">
    <property type="method" value="EM"/>
    <property type="resolution" value="3.30 A"/>
    <property type="chains" value="R/r=2-263"/>
</dbReference>
<dbReference type="PDB" id="6MSK">
    <property type="method" value="EM"/>
    <property type="resolution" value="3.20 A"/>
    <property type="chains" value="R/r=2-263"/>
</dbReference>
<dbReference type="PDB" id="6R70">
    <property type="method" value="EM"/>
    <property type="resolution" value="3.50 A"/>
    <property type="chains" value="K/Y=60-260"/>
</dbReference>
<dbReference type="PDB" id="6REY">
    <property type="method" value="EM"/>
    <property type="resolution" value="3.00 A"/>
    <property type="chains" value="L/Z=60-263"/>
</dbReference>
<dbReference type="PDB" id="6RGQ">
    <property type="method" value="EM"/>
    <property type="resolution" value="2.60 A"/>
    <property type="chains" value="L/Z=60-263"/>
</dbReference>
<dbReference type="PDB" id="6WJD">
    <property type="method" value="EM"/>
    <property type="resolution" value="4.80 A"/>
    <property type="chains" value="R/r=2-263"/>
</dbReference>
<dbReference type="PDB" id="6WJN">
    <property type="method" value="EM"/>
    <property type="resolution" value="5.70 A"/>
    <property type="chains" value="R/r=60-260"/>
</dbReference>
<dbReference type="PDB" id="6XMJ">
    <property type="method" value="EM"/>
    <property type="resolution" value="3.00 A"/>
    <property type="chains" value="L=60-260"/>
</dbReference>
<dbReference type="PDB" id="7LXV">
    <property type="method" value="EM"/>
    <property type="resolution" value="3.40 A"/>
    <property type="chains" value="K/Y=60-263"/>
</dbReference>
<dbReference type="PDB" id="7NAN">
    <property type="method" value="EM"/>
    <property type="resolution" value="2.80 A"/>
    <property type="chains" value="K/Y=1-263"/>
</dbReference>
<dbReference type="PDB" id="7NAO">
    <property type="method" value="EM"/>
    <property type="resolution" value="2.90 A"/>
    <property type="chains" value="K/Y=1-263"/>
</dbReference>
<dbReference type="PDB" id="7NAP">
    <property type="method" value="EM"/>
    <property type="resolution" value="3.20 A"/>
    <property type="chains" value="K/Y=1-263"/>
</dbReference>
<dbReference type="PDB" id="7NAQ">
    <property type="method" value="EM"/>
    <property type="resolution" value="3.20 A"/>
    <property type="chains" value="K/Y=1-263"/>
</dbReference>
<dbReference type="PDB" id="7NHT">
    <property type="method" value="EM"/>
    <property type="resolution" value="2.80 A"/>
    <property type="chains" value="K=1-263"/>
</dbReference>
<dbReference type="PDB" id="7PG9">
    <property type="method" value="EM"/>
    <property type="resolution" value="3.70 A"/>
    <property type="chains" value="L/Z=60-263"/>
</dbReference>
<dbReference type="PDB" id="7QXN">
    <property type="method" value="EM"/>
    <property type="resolution" value="3.70 A"/>
    <property type="chains" value="R/r=2-263"/>
</dbReference>
<dbReference type="PDB" id="7QXP">
    <property type="method" value="EM"/>
    <property type="resolution" value="3.60 A"/>
    <property type="chains" value="R/r=2-263"/>
</dbReference>
<dbReference type="PDB" id="7QXU">
    <property type="method" value="EM"/>
    <property type="resolution" value="4.30 A"/>
    <property type="chains" value="R/r=2-263"/>
</dbReference>
<dbReference type="PDB" id="7QXW">
    <property type="method" value="EM"/>
    <property type="resolution" value="4.10 A"/>
    <property type="chains" value="R/r=2-263"/>
</dbReference>
<dbReference type="PDB" id="7QXX">
    <property type="method" value="EM"/>
    <property type="resolution" value="4.40 A"/>
    <property type="chains" value="R/r=2-263"/>
</dbReference>
<dbReference type="PDB" id="7QY7">
    <property type="method" value="EM"/>
    <property type="resolution" value="4.70 A"/>
    <property type="chains" value="R/r=2-263"/>
</dbReference>
<dbReference type="PDB" id="7QYA">
    <property type="method" value="EM"/>
    <property type="resolution" value="4.80 A"/>
    <property type="chains" value="R/r=2-263"/>
</dbReference>
<dbReference type="PDB" id="7QYB">
    <property type="method" value="EM"/>
    <property type="resolution" value="4.10 A"/>
    <property type="chains" value="R/r=2-263"/>
</dbReference>
<dbReference type="PDB" id="7V5G">
    <property type="method" value="EM"/>
    <property type="resolution" value="4.47 A"/>
    <property type="chains" value="E/L=60-263"/>
</dbReference>
<dbReference type="PDB" id="7V5M">
    <property type="method" value="EM"/>
    <property type="resolution" value="3.88 A"/>
    <property type="chains" value="L/Z=60-263"/>
</dbReference>
<dbReference type="PDB" id="7W37">
    <property type="method" value="EM"/>
    <property type="resolution" value="3.00 A"/>
    <property type="chains" value="R/r=1-263"/>
</dbReference>
<dbReference type="PDB" id="7W38">
    <property type="method" value="EM"/>
    <property type="resolution" value="3.10 A"/>
    <property type="chains" value="R/r=1-263"/>
</dbReference>
<dbReference type="PDB" id="7W39">
    <property type="method" value="EM"/>
    <property type="resolution" value="3.20 A"/>
    <property type="chains" value="R/r=1-263"/>
</dbReference>
<dbReference type="PDB" id="7W3A">
    <property type="method" value="EM"/>
    <property type="resolution" value="3.50 A"/>
    <property type="chains" value="R/r=1-263"/>
</dbReference>
<dbReference type="PDB" id="7W3B">
    <property type="method" value="EM"/>
    <property type="resolution" value="3.60 A"/>
    <property type="chains" value="R/r=1-263"/>
</dbReference>
<dbReference type="PDB" id="7W3C">
    <property type="method" value="EM"/>
    <property type="resolution" value="3.40 A"/>
    <property type="chains" value="R/r=1-263"/>
</dbReference>
<dbReference type="PDB" id="7W3F">
    <property type="method" value="EM"/>
    <property type="resolution" value="3.30 A"/>
    <property type="chains" value="R/r=1-263"/>
</dbReference>
<dbReference type="PDB" id="7W3G">
    <property type="method" value="EM"/>
    <property type="resolution" value="3.20 A"/>
    <property type="chains" value="R/r=1-263"/>
</dbReference>
<dbReference type="PDB" id="7W3H">
    <property type="method" value="EM"/>
    <property type="resolution" value="3.20 A"/>
    <property type="chains" value="R/r=1-263"/>
</dbReference>
<dbReference type="PDB" id="7W3I">
    <property type="method" value="EM"/>
    <property type="resolution" value="3.50 A"/>
    <property type="chains" value="R/r=1-263"/>
</dbReference>
<dbReference type="PDB" id="7W3J">
    <property type="method" value="EM"/>
    <property type="resolution" value="3.50 A"/>
    <property type="chains" value="R/r=1-263"/>
</dbReference>
<dbReference type="PDB" id="7W3K">
    <property type="method" value="EM"/>
    <property type="resolution" value="3.60 A"/>
    <property type="chains" value="R/r=1-263"/>
</dbReference>
<dbReference type="PDB" id="7W3M">
    <property type="method" value="EM"/>
    <property type="resolution" value="3.50 A"/>
    <property type="chains" value="R/r=1-263"/>
</dbReference>
<dbReference type="PDB" id="8BZL">
    <property type="method" value="X-ray"/>
    <property type="resolution" value="2.14 A"/>
    <property type="chains" value="K/Y=1-263"/>
</dbReference>
<dbReference type="PDB" id="8CVR">
    <property type="method" value="EM"/>
    <property type="resolution" value="2.70 A"/>
    <property type="chains" value="L/Z=60-263"/>
</dbReference>
<dbReference type="PDB" id="8CVS">
    <property type="method" value="EM"/>
    <property type="resolution" value="3.10 A"/>
    <property type="chains" value="K/Y=60-263"/>
</dbReference>
<dbReference type="PDB" id="8CVT">
    <property type="method" value="EM"/>
    <property type="resolution" value="3.00 A"/>
    <property type="chains" value="R/r=1-263"/>
</dbReference>
<dbReference type="PDB" id="8CXB">
    <property type="method" value="EM"/>
    <property type="resolution" value="2.90 A"/>
    <property type="chains" value="K/Y=1-263"/>
</dbReference>
<dbReference type="PDB" id="8QYN">
    <property type="method" value="EM"/>
    <property type="resolution" value="2.88 A"/>
    <property type="chains" value="N=1-263"/>
</dbReference>
<dbReference type="PDB" id="8QYO">
    <property type="method" value="EM"/>
    <property type="resolution" value="2.84 A"/>
    <property type="chains" value="K/Y=1-263"/>
</dbReference>
<dbReference type="PDB" id="8QYS">
    <property type="method" value="EM"/>
    <property type="resolution" value="3.89 A"/>
    <property type="chains" value="N/e=52-259"/>
</dbReference>
<dbReference type="PDB" id="8QZ9">
    <property type="method" value="EM"/>
    <property type="resolution" value="2.95 A"/>
    <property type="chains" value="N=1-263"/>
</dbReference>
<dbReference type="PDB" id="8TM6">
    <property type="method" value="EM"/>
    <property type="resolution" value="2.80 A"/>
    <property type="chains" value="K/Y=1-263"/>
</dbReference>
<dbReference type="PDB" id="8UD9">
    <property type="method" value="EM"/>
    <property type="resolution" value="2.04 A"/>
    <property type="chains" value="L/Z=60-263"/>
</dbReference>
<dbReference type="PDB" id="8YIX">
    <property type="method" value="EM"/>
    <property type="resolution" value="2.91 A"/>
    <property type="chains" value="K=1-263"/>
</dbReference>
<dbReference type="PDB" id="8YIY">
    <property type="method" value="EM"/>
    <property type="resolution" value="3.41 A"/>
    <property type="chains" value="K/Y=1-263"/>
</dbReference>
<dbReference type="PDB" id="8YIZ">
    <property type="method" value="EM"/>
    <property type="resolution" value="3.79 A"/>
    <property type="chains" value="K/Y=1-263"/>
</dbReference>
<dbReference type="PDB" id="9E8G">
    <property type="method" value="EM"/>
    <property type="resolution" value="3.01 A"/>
    <property type="chains" value="S=1-263"/>
</dbReference>
<dbReference type="PDB" id="9E8O">
    <property type="method" value="EM"/>
    <property type="resolution" value="3.10 A"/>
    <property type="chains" value="R=1-263"/>
</dbReference>
<dbReference type="PDB" id="9E8Q">
    <property type="method" value="EM"/>
    <property type="resolution" value="3.16 A"/>
    <property type="chains" value="R=1-263"/>
</dbReference>
<dbReference type="PDB" id="9HMN">
    <property type="method" value="EM"/>
    <property type="resolution" value="2.55 A"/>
    <property type="chains" value="L/b=60-263"/>
</dbReference>
<dbReference type="PDBsum" id="4R3O"/>
<dbReference type="PDBsum" id="4R67"/>
<dbReference type="PDBsum" id="5A0Q"/>
<dbReference type="PDBsum" id="5GJQ"/>
<dbReference type="PDBsum" id="5GJR"/>
<dbReference type="PDBsum" id="5L4G"/>
<dbReference type="PDBsum" id="5L5W"/>
<dbReference type="PDBsum" id="5L5X"/>
<dbReference type="PDBsum" id="5L5Y"/>
<dbReference type="PDBsum" id="5L5Z"/>
<dbReference type="PDBsum" id="5L60"/>
<dbReference type="PDBsum" id="5L61"/>
<dbReference type="PDBsum" id="5L62"/>
<dbReference type="PDBsum" id="5L63"/>
<dbReference type="PDBsum" id="5L64"/>
<dbReference type="PDBsum" id="5LE5"/>
<dbReference type="PDBsum" id="5LEX"/>
<dbReference type="PDBsum" id="5LEY"/>
<dbReference type="PDBsum" id="5LEZ"/>
<dbReference type="PDBsum" id="5LF0"/>
<dbReference type="PDBsum" id="5LF1"/>
<dbReference type="PDBsum" id="5LF3"/>
<dbReference type="PDBsum" id="5LF4"/>
<dbReference type="PDBsum" id="5LF6"/>
<dbReference type="PDBsum" id="5LF7"/>
<dbReference type="PDBsum" id="5LN3"/>
<dbReference type="PDBsum" id="5M32"/>
<dbReference type="PDBsum" id="5T0C"/>
<dbReference type="PDBsum" id="5T0G"/>
<dbReference type="PDBsum" id="5T0H"/>
<dbReference type="PDBsum" id="5T0I"/>
<dbReference type="PDBsum" id="5T0J"/>
<dbReference type="PDBsum" id="5VFO"/>
<dbReference type="PDBsum" id="5VFP"/>
<dbReference type="PDBsum" id="5VFQ"/>
<dbReference type="PDBsum" id="5VFR"/>
<dbReference type="PDBsum" id="5VFS"/>
<dbReference type="PDBsum" id="5VFT"/>
<dbReference type="PDBsum" id="5VFU"/>
<dbReference type="PDBsum" id="6KWY"/>
<dbReference type="PDBsum" id="6MSB"/>
<dbReference type="PDBsum" id="6MSD"/>
<dbReference type="PDBsum" id="6MSE"/>
<dbReference type="PDBsum" id="6MSG"/>
<dbReference type="PDBsum" id="6MSH"/>
<dbReference type="PDBsum" id="6MSJ"/>
<dbReference type="PDBsum" id="6MSK"/>
<dbReference type="PDBsum" id="6R70"/>
<dbReference type="PDBsum" id="6REY"/>
<dbReference type="PDBsum" id="6RGQ"/>
<dbReference type="PDBsum" id="6WJD"/>
<dbReference type="PDBsum" id="6WJN"/>
<dbReference type="PDBsum" id="6XMJ"/>
<dbReference type="PDBsum" id="7LXV"/>
<dbReference type="PDBsum" id="7NAN"/>
<dbReference type="PDBsum" id="7NAO"/>
<dbReference type="PDBsum" id="7NAP"/>
<dbReference type="PDBsum" id="7NAQ"/>
<dbReference type="PDBsum" id="7NHT"/>
<dbReference type="PDBsum" id="7PG9"/>
<dbReference type="PDBsum" id="7QXN"/>
<dbReference type="PDBsum" id="7QXP"/>
<dbReference type="PDBsum" id="7QXU"/>
<dbReference type="PDBsum" id="7QXW"/>
<dbReference type="PDBsum" id="7QXX"/>
<dbReference type="PDBsum" id="7QY7"/>
<dbReference type="PDBsum" id="7QYA"/>
<dbReference type="PDBsum" id="7QYB"/>
<dbReference type="PDBsum" id="7V5G"/>
<dbReference type="PDBsum" id="7V5M"/>
<dbReference type="PDBsum" id="7W37"/>
<dbReference type="PDBsum" id="7W38"/>
<dbReference type="PDBsum" id="7W39"/>
<dbReference type="PDBsum" id="7W3A"/>
<dbReference type="PDBsum" id="7W3B"/>
<dbReference type="PDBsum" id="7W3C"/>
<dbReference type="PDBsum" id="7W3F"/>
<dbReference type="PDBsum" id="7W3G"/>
<dbReference type="PDBsum" id="7W3H"/>
<dbReference type="PDBsum" id="7W3I"/>
<dbReference type="PDBsum" id="7W3J"/>
<dbReference type="PDBsum" id="7W3K"/>
<dbReference type="PDBsum" id="7W3M"/>
<dbReference type="PDBsum" id="8BZL"/>
<dbReference type="PDBsum" id="8CVR"/>
<dbReference type="PDBsum" id="8CVS"/>
<dbReference type="PDBsum" id="8CVT"/>
<dbReference type="PDBsum" id="8CXB"/>
<dbReference type="PDBsum" id="8QYN"/>
<dbReference type="PDBsum" id="8QYO"/>
<dbReference type="PDBsum" id="8QYS"/>
<dbReference type="PDBsum" id="8QZ9"/>
<dbReference type="PDBsum" id="8TM6"/>
<dbReference type="PDBsum" id="8UD9"/>
<dbReference type="PDBsum" id="8YIX"/>
<dbReference type="PDBsum" id="8YIY"/>
<dbReference type="PDBsum" id="8YIZ"/>
<dbReference type="PDBsum" id="9E8G"/>
<dbReference type="PDBsum" id="9E8O"/>
<dbReference type="PDBsum" id="9E8Q"/>
<dbReference type="PDBsum" id="9HMN"/>
<dbReference type="EMDB" id="EMD-0781"/>
<dbReference type="EMDB" id="EMD-12341"/>
<dbReference type="EMDB" id="EMD-13389"/>
<dbReference type="EMDB" id="EMD-14201"/>
<dbReference type="EMDB" id="EMD-14202"/>
<dbReference type="EMDB" id="EMD-14203"/>
<dbReference type="EMDB" id="EMD-14204"/>
<dbReference type="EMDB" id="EMD-14205"/>
<dbReference type="EMDB" id="EMD-14209"/>
<dbReference type="EMDB" id="EMD-14210"/>
<dbReference type="EMDB" id="EMD-14211"/>
<dbReference type="EMDB" id="EMD-18759"/>
<dbReference type="EMDB" id="EMD-18760"/>
<dbReference type="EMDB" id="EMD-18761"/>
<dbReference type="EMDB" id="EMD-18773"/>
<dbReference type="EMDB" id="EMD-21691"/>
<dbReference type="EMDB" id="EMD-21696"/>
<dbReference type="EMDB" id="EMD-22259"/>
<dbReference type="EMDB" id="EMD-23576"/>
<dbReference type="EMDB" id="EMD-24275"/>
<dbReference type="EMDB" id="EMD-24276"/>
<dbReference type="EMDB" id="EMD-24277"/>
<dbReference type="EMDB" id="EMD-24278"/>
<dbReference type="EMDB" id="EMD-27013"/>
<dbReference type="EMDB" id="EMD-27015"/>
<dbReference type="EMDB" id="EMD-27018"/>
<dbReference type="EMDB" id="EMD-2981"/>
<dbReference type="EMDB" id="EMD-31724"/>
<dbReference type="EMDB" id="EMD-31727"/>
<dbReference type="EMDB" id="EMD-32272"/>
<dbReference type="EMDB" id="EMD-32273"/>
<dbReference type="EMDB" id="EMD-32274"/>
<dbReference type="EMDB" id="EMD-32275"/>
<dbReference type="EMDB" id="EMD-32276"/>
<dbReference type="EMDB" id="EMD-32277"/>
<dbReference type="EMDB" id="EMD-32278"/>
<dbReference type="EMDB" id="EMD-32279"/>
<dbReference type="EMDB" id="EMD-32280"/>
<dbReference type="EMDB" id="EMD-32281"/>
<dbReference type="EMDB" id="EMD-32282"/>
<dbReference type="EMDB" id="EMD-32283"/>
<dbReference type="EMDB" id="EMD-32284"/>
<dbReference type="EMDB" id="EMD-39332"/>
<dbReference type="EMDB" id="EMD-39333"/>
<dbReference type="EMDB" id="EMD-39334"/>
<dbReference type="EMDB" id="EMD-4089"/>
<dbReference type="EMDB" id="EMD-41380"/>
<dbReference type="EMDB" id="EMD-4146"/>
<dbReference type="EMDB" id="EMD-42148"/>
<dbReference type="EMDB" id="EMD-4738"/>
<dbReference type="EMDB" id="EMD-47719"/>
<dbReference type="EMDB" id="EMD-47726"/>
<dbReference type="EMDB" id="EMD-47727"/>
<dbReference type="EMDB" id="EMD-4860"/>
<dbReference type="EMDB" id="EMD-4877"/>
<dbReference type="EMDB" id="EMD-52296"/>
<dbReference type="EMDB" id="EMD-60138"/>
<dbReference type="EMDB" id="EMD-8662"/>
<dbReference type="EMDB" id="EMD-8663"/>
<dbReference type="EMDB" id="EMD-8664"/>
<dbReference type="EMDB" id="EMD-8665"/>
<dbReference type="EMDB" id="EMD-8666"/>
<dbReference type="EMDB" id="EMD-8667"/>
<dbReference type="EMDB" id="EMD-8668"/>
<dbReference type="EMDB" id="EMD-9216"/>
<dbReference type="EMDB" id="EMD-9217"/>
<dbReference type="EMDB" id="EMD-9218"/>
<dbReference type="EMDB" id="EMD-9219"/>
<dbReference type="EMDB" id="EMD-9220"/>
<dbReference type="EMDB" id="EMD-9221"/>
<dbReference type="EMDB" id="EMD-9222"/>
<dbReference type="EMDB" id="EMD-9511"/>
<dbReference type="EMDB" id="EMD-9512"/>
<dbReference type="SMR" id="P28074"/>
<dbReference type="BioGRID" id="111666">
    <property type="interactions" value="263"/>
</dbReference>
<dbReference type="ComplexPortal" id="CPX-5993">
    <property type="entry name" value="26S proteasome complex"/>
</dbReference>
<dbReference type="ComplexPortal" id="CPX-8806">
    <property type="entry name" value="20S proteasome complex"/>
</dbReference>
<dbReference type="ComplexPortal" id="CPX-8841">
    <property type="entry name" value="PA200-20S single-capped proteasome"/>
</dbReference>
<dbReference type="ComplexPortal" id="CPX-8842">
    <property type="entry name" value="PA28-alphabeta double-capped 20S proteasome complex"/>
</dbReference>
<dbReference type="ComplexPortal" id="CPX-9001">
    <property type="entry name" value="PA28-gamma single-capped 20S proteasome complex"/>
</dbReference>
<dbReference type="ComplexPortal" id="CPX-9002">
    <property type="entry name" value="PA28-alphabeta single-capped 20S proteasome complex"/>
</dbReference>
<dbReference type="ComplexPortal" id="CPX-9021">
    <property type="entry name" value="20S spermatoproteasome complex"/>
</dbReference>
<dbReference type="ComplexPortal" id="CPX-9022">
    <property type="entry name" value="PA28-gamma double-capped 20S proteasome complex"/>
</dbReference>
<dbReference type="ComplexPortal" id="CPX-9063">
    <property type="entry name" value="PA200-20S-PA200 double-capped proteasome complex"/>
</dbReference>
<dbReference type="ComplexPortal" id="CPX-9082">
    <property type="entry name" value="19S-20S-PA28-alphabeta hybrid proteasome complex"/>
</dbReference>
<dbReference type="ComplexPortal" id="CPX-9085">
    <property type="entry name" value="19S-20S-PA28-gamma hybrid proteasome complex"/>
</dbReference>
<dbReference type="ComplexPortal" id="CPX-9086">
    <property type="entry name" value="30S proteasome complex"/>
</dbReference>
<dbReference type="CORUM" id="P28074"/>
<dbReference type="DIP" id="DIP-27540N"/>
<dbReference type="FunCoup" id="P28074">
    <property type="interactions" value="1635"/>
</dbReference>
<dbReference type="IntAct" id="P28074">
    <property type="interactions" value="111"/>
</dbReference>
<dbReference type="MINT" id="P28074"/>
<dbReference type="STRING" id="9606.ENSP00000355325"/>
<dbReference type="BindingDB" id="P28074"/>
<dbReference type="ChEMBL" id="CHEMBL4662"/>
<dbReference type="DrugBank" id="DB08515">
    <property type="generic name" value="(3AR,6R,6AS)-6-((S)-((S)-CYCLOHEX-2-ENYL)(HYDROXY)METHYL)-6A-METHYL-4-OXO-HEXAHYDRO-2H-FURO[3,2-C]PYRROLE-6-CARBALDEHYDE"/>
</dbReference>
<dbReference type="DrugBank" id="DB00188">
    <property type="generic name" value="Bortezomib"/>
</dbReference>
<dbReference type="DrugBank" id="DB08889">
    <property type="generic name" value="Carfilzomib"/>
</dbReference>
<dbReference type="DrugBank" id="DB09570">
    <property type="generic name" value="Ixazomib"/>
</dbReference>
<dbReference type="DrugCentral" id="P28074"/>
<dbReference type="GuidetoPHARMACOLOGY" id="2406"/>
<dbReference type="MEROPS" id="T01.012"/>
<dbReference type="GlyGen" id="P28074">
    <property type="glycosylation" value="1 site, 1 O-linked glycan (1 site)"/>
</dbReference>
<dbReference type="iPTMnet" id="P28074"/>
<dbReference type="PhosphoSitePlus" id="P28074"/>
<dbReference type="SwissPalm" id="P28074"/>
<dbReference type="BioMuta" id="PSMB5"/>
<dbReference type="DMDM" id="187608890"/>
<dbReference type="REPRODUCTION-2DPAGE" id="IPI00479306"/>
<dbReference type="jPOST" id="P28074"/>
<dbReference type="MassIVE" id="P28074"/>
<dbReference type="PaxDb" id="9606-ENSP00000355325"/>
<dbReference type="PeptideAtlas" id="P28074"/>
<dbReference type="ProteomicsDB" id="19085"/>
<dbReference type="ProteomicsDB" id="54448">
    <molecule id="P28074-1"/>
</dbReference>
<dbReference type="ProteomicsDB" id="54449">
    <molecule id="P28074-2"/>
</dbReference>
<dbReference type="Pumba" id="P28074"/>
<dbReference type="TopDownProteomics" id="P28074-1">
    <molecule id="P28074-1"/>
</dbReference>
<dbReference type="Antibodypedia" id="22368">
    <property type="antibodies" value="249 antibodies from 35 providers"/>
</dbReference>
<dbReference type="DNASU" id="5693"/>
<dbReference type="Ensembl" id="ENST00000361611.11">
    <molecule id="P28074-1"/>
    <property type="protein sequence ID" value="ENSP00000355325.6"/>
    <property type="gene ID" value="ENSG00000100804.19"/>
</dbReference>
<dbReference type="Ensembl" id="ENST00000425762.2">
    <molecule id="P28074-3"/>
    <property type="protein sequence ID" value="ENSP00000395206.2"/>
    <property type="gene ID" value="ENSG00000100804.19"/>
</dbReference>
<dbReference type="Ensembl" id="ENST00000493471.2">
    <molecule id="P28074-2"/>
    <property type="protein sequence ID" value="ENSP00000452424.1"/>
    <property type="gene ID" value="ENSG00000100804.19"/>
</dbReference>
<dbReference type="GeneID" id="5693"/>
<dbReference type="KEGG" id="hsa:5693"/>
<dbReference type="MANE-Select" id="ENST00000361611.11">
    <property type="protein sequence ID" value="ENSP00000355325.6"/>
    <property type="RefSeq nucleotide sequence ID" value="NM_002797.5"/>
    <property type="RefSeq protein sequence ID" value="NP_002788.1"/>
</dbReference>
<dbReference type="UCSC" id="uc001wii.3">
    <molecule id="P28074-1"/>
    <property type="organism name" value="human"/>
</dbReference>
<dbReference type="AGR" id="HGNC:9542"/>
<dbReference type="CTD" id="5693"/>
<dbReference type="DisGeNET" id="5693"/>
<dbReference type="GeneCards" id="PSMB5"/>
<dbReference type="HGNC" id="HGNC:9542">
    <property type="gene designation" value="PSMB5"/>
</dbReference>
<dbReference type="HPA" id="ENSG00000100804">
    <property type="expression patterns" value="Low tissue specificity"/>
</dbReference>
<dbReference type="MIM" id="600306">
    <property type="type" value="gene"/>
</dbReference>
<dbReference type="neXtProt" id="NX_P28074"/>
<dbReference type="OpenTargets" id="ENSG00000100804"/>
<dbReference type="PharmGKB" id="PA33887"/>
<dbReference type="VEuPathDB" id="HostDB:ENSG00000100804"/>
<dbReference type="eggNOG" id="KOG0175">
    <property type="taxonomic scope" value="Eukaryota"/>
</dbReference>
<dbReference type="GeneTree" id="ENSGT00940000157841"/>
<dbReference type="HOGENOM" id="CLU_035750_7_0_1"/>
<dbReference type="InParanoid" id="P28074"/>
<dbReference type="OMA" id="NLGMAMQ"/>
<dbReference type="OrthoDB" id="37597at2759"/>
<dbReference type="PAN-GO" id="P28074">
    <property type="GO annotations" value="5 GO annotations based on evolutionary models"/>
</dbReference>
<dbReference type="PhylomeDB" id="P28074"/>
<dbReference type="TreeFam" id="TF106223"/>
<dbReference type="PathwayCommons" id="P28074"/>
<dbReference type="Reactome" id="R-HSA-1169091">
    <property type="pathway name" value="Activation of NF-kappaB in B cells"/>
</dbReference>
<dbReference type="Reactome" id="R-HSA-1234176">
    <property type="pathway name" value="Oxygen-dependent proline hydroxylation of Hypoxia-inducible Factor Alpha"/>
</dbReference>
<dbReference type="Reactome" id="R-HSA-1236974">
    <property type="pathway name" value="ER-Phagosome pathway"/>
</dbReference>
<dbReference type="Reactome" id="R-HSA-1236978">
    <property type="pathway name" value="Cross-presentation of soluble exogenous antigens (endosomes)"/>
</dbReference>
<dbReference type="Reactome" id="R-HSA-174084">
    <property type="pathway name" value="Autodegradation of Cdh1 by Cdh1:APC/C"/>
</dbReference>
<dbReference type="Reactome" id="R-HSA-174113">
    <property type="pathway name" value="SCF-beta-TrCP mediated degradation of Emi1"/>
</dbReference>
<dbReference type="Reactome" id="R-HSA-174154">
    <property type="pathway name" value="APC/C:Cdc20 mediated degradation of Securin"/>
</dbReference>
<dbReference type="Reactome" id="R-HSA-174178">
    <property type="pathway name" value="APC/C:Cdh1 mediated degradation of Cdc20 and other APC/C:Cdh1 targeted proteins in late mitosis/early G1"/>
</dbReference>
<dbReference type="Reactome" id="R-HSA-174184">
    <property type="pathway name" value="Cdc20:Phospho-APC/C mediated degradation of Cyclin A"/>
</dbReference>
<dbReference type="Reactome" id="R-HSA-180534">
    <property type="pathway name" value="Vpu mediated degradation of CD4"/>
</dbReference>
<dbReference type="Reactome" id="R-HSA-180585">
    <property type="pathway name" value="Vif-mediated degradation of APOBEC3G"/>
</dbReference>
<dbReference type="Reactome" id="R-HSA-187577">
    <property type="pathway name" value="SCF(Skp2)-mediated degradation of p27/p21"/>
</dbReference>
<dbReference type="Reactome" id="R-HSA-195253">
    <property type="pathway name" value="Degradation of beta-catenin by the destruction complex"/>
</dbReference>
<dbReference type="Reactome" id="R-HSA-202424">
    <property type="pathway name" value="Downstream TCR signaling"/>
</dbReference>
<dbReference type="Reactome" id="R-HSA-211733">
    <property type="pathway name" value="Regulation of activated PAK-2p34 by proteasome mediated degradation"/>
</dbReference>
<dbReference type="Reactome" id="R-HSA-2467813">
    <property type="pathway name" value="Separation of Sister Chromatids"/>
</dbReference>
<dbReference type="Reactome" id="R-HSA-2871837">
    <property type="pathway name" value="FCERI mediated NF-kB activation"/>
</dbReference>
<dbReference type="Reactome" id="R-HSA-349425">
    <property type="pathway name" value="Autodegradation of the E3 ubiquitin ligase COP1"/>
</dbReference>
<dbReference type="Reactome" id="R-HSA-350562">
    <property type="pathway name" value="Regulation of ornithine decarboxylase (ODC)"/>
</dbReference>
<dbReference type="Reactome" id="R-HSA-382556">
    <property type="pathway name" value="ABC-family proteins mediated transport"/>
</dbReference>
<dbReference type="Reactome" id="R-HSA-450408">
    <property type="pathway name" value="AUF1 (hnRNP D0) binds and destabilizes mRNA"/>
</dbReference>
<dbReference type="Reactome" id="R-HSA-4608870">
    <property type="pathway name" value="Asymmetric localization of PCP proteins"/>
</dbReference>
<dbReference type="Reactome" id="R-HSA-4641257">
    <property type="pathway name" value="Degradation of AXIN"/>
</dbReference>
<dbReference type="Reactome" id="R-HSA-4641258">
    <property type="pathway name" value="Degradation of DVL"/>
</dbReference>
<dbReference type="Reactome" id="R-HSA-5358346">
    <property type="pathway name" value="Hedgehog ligand biogenesis"/>
</dbReference>
<dbReference type="Reactome" id="R-HSA-5362768">
    <property type="pathway name" value="Hh mutants are degraded by ERAD"/>
</dbReference>
<dbReference type="Reactome" id="R-HSA-5607761">
    <property type="pathway name" value="Dectin-1 mediated noncanonical NF-kB signaling"/>
</dbReference>
<dbReference type="Reactome" id="R-HSA-5607764">
    <property type="pathway name" value="CLEC7A (Dectin-1) signaling"/>
</dbReference>
<dbReference type="Reactome" id="R-HSA-5610780">
    <property type="pathway name" value="Degradation of GLI1 by the proteasome"/>
</dbReference>
<dbReference type="Reactome" id="R-HSA-5610783">
    <property type="pathway name" value="Degradation of GLI2 by the proteasome"/>
</dbReference>
<dbReference type="Reactome" id="R-HSA-5610785">
    <property type="pathway name" value="GLI3 is processed to GLI3R by the proteasome"/>
</dbReference>
<dbReference type="Reactome" id="R-HSA-5632684">
    <property type="pathway name" value="Hedgehog 'on' state"/>
</dbReference>
<dbReference type="Reactome" id="R-HSA-5658442">
    <property type="pathway name" value="Regulation of RAS by GAPs"/>
</dbReference>
<dbReference type="Reactome" id="R-HSA-5668541">
    <property type="pathway name" value="TNFR2 non-canonical NF-kB pathway"/>
</dbReference>
<dbReference type="Reactome" id="R-HSA-5676590">
    <property type="pathway name" value="NIK--&gt;noncanonical NF-kB signaling"/>
</dbReference>
<dbReference type="Reactome" id="R-HSA-5678895">
    <property type="pathway name" value="Defective CFTR causes cystic fibrosis"/>
</dbReference>
<dbReference type="Reactome" id="R-HSA-5687128">
    <property type="pathway name" value="MAPK6/MAPK4 signaling"/>
</dbReference>
<dbReference type="Reactome" id="R-HSA-5689603">
    <property type="pathway name" value="UCH proteinases"/>
</dbReference>
<dbReference type="Reactome" id="R-HSA-5689880">
    <property type="pathway name" value="Ub-specific processing proteases"/>
</dbReference>
<dbReference type="Reactome" id="R-HSA-68867">
    <property type="pathway name" value="Assembly of the pre-replicative complex"/>
</dbReference>
<dbReference type="Reactome" id="R-HSA-68949">
    <property type="pathway name" value="Orc1 removal from chromatin"/>
</dbReference>
<dbReference type="Reactome" id="R-HSA-69017">
    <property type="pathway name" value="CDK-mediated phosphorylation and removal of Cdc6"/>
</dbReference>
<dbReference type="Reactome" id="R-HSA-69481">
    <property type="pathway name" value="G2/M Checkpoints"/>
</dbReference>
<dbReference type="Reactome" id="R-HSA-69601">
    <property type="pathway name" value="Ubiquitin Mediated Degradation of Phosphorylated Cdc25A"/>
</dbReference>
<dbReference type="Reactome" id="R-HSA-75815">
    <property type="pathway name" value="Ubiquitin-dependent degradation of Cyclin D"/>
</dbReference>
<dbReference type="Reactome" id="R-HSA-8852276">
    <property type="pathway name" value="The role of GTSE1 in G2/M progression after G2 checkpoint"/>
</dbReference>
<dbReference type="Reactome" id="R-HSA-8854050">
    <property type="pathway name" value="FBXL7 down-regulates AURKA during mitotic entry and in early mitosis"/>
</dbReference>
<dbReference type="Reactome" id="R-HSA-8939236">
    <property type="pathway name" value="RUNX1 regulates transcription of genes involved in differentiation of HSCs"/>
</dbReference>
<dbReference type="Reactome" id="R-HSA-8939902">
    <property type="pathway name" value="Regulation of RUNX2 expression and activity"/>
</dbReference>
<dbReference type="Reactome" id="R-HSA-8941858">
    <property type="pathway name" value="Regulation of RUNX3 expression and activity"/>
</dbReference>
<dbReference type="Reactome" id="R-HSA-8948751">
    <property type="pathway name" value="Regulation of PTEN stability and activity"/>
</dbReference>
<dbReference type="Reactome" id="R-HSA-8951664">
    <property type="pathway name" value="Neddylation"/>
</dbReference>
<dbReference type="Reactome" id="R-HSA-9010553">
    <property type="pathway name" value="Regulation of expression of SLITs and ROBOs"/>
</dbReference>
<dbReference type="Reactome" id="R-HSA-9020702">
    <property type="pathway name" value="Interleukin-1 signaling"/>
</dbReference>
<dbReference type="Reactome" id="R-HSA-9604323">
    <property type="pathway name" value="Negative regulation of NOTCH4 signaling"/>
</dbReference>
<dbReference type="Reactome" id="R-HSA-9755511">
    <property type="pathway name" value="KEAP1-NFE2L2 pathway"/>
</dbReference>
<dbReference type="Reactome" id="R-HSA-9762114">
    <property type="pathway name" value="GSK3B and BTRC:CUL1-mediated-degradation of NFE2L2"/>
</dbReference>
<dbReference type="Reactome" id="R-HSA-9824272">
    <property type="pathway name" value="Somitogenesis"/>
</dbReference>
<dbReference type="Reactome" id="R-HSA-983168">
    <property type="pathway name" value="Antigen processing: Ubiquitination &amp; Proteasome degradation"/>
</dbReference>
<dbReference type="Reactome" id="R-HSA-9907900">
    <property type="pathway name" value="Proteasome assembly"/>
</dbReference>
<dbReference type="SignaLink" id="P28074"/>
<dbReference type="SIGNOR" id="P28074"/>
<dbReference type="BioGRID-ORCS" id="5693">
    <property type="hits" value="805 hits in 1188 CRISPR screens"/>
</dbReference>
<dbReference type="CD-CODE" id="B5B9A610">
    <property type="entry name" value="PML body"/>
</dbReference>
<dbReference type="ChiTaRS" id="PSMB5">
    <property type="organism name" value="human"/>
</dbReference>
<dbReference type="EvolutionaryTrace" id="P28074"/>
<dbReference type="GeneWiki" id="PSMB5"/>
<dbReference type="GenomeRNAi" id="5693"/>
<dbReference type="Pharos" id="P28074">
    <property type="development level" value="Tclin"/>
</dbReference>
<dbReference type="PRO" id="PR:P28074"/>
<dbReference type="Proteomes" id="UP000005640">
    <property type="component" value="Chromosome 14"/>
</dbReference>
<dbReference type="RNAct" id="P28074">
    <property type="molecule type" value="protein"/>
</dbReference>
<dbReference type="Bgee" id="ENSG00000100804">
    <property type="expression patterns" value="Expressed in gastrocnemius and 213 other cell types or tissues"/>
</dbReference>
<dbReference type="ExpressionAtlas" id="P28074">
    <property type="expression patterns" value="baseline and differential"/>
</dbReference>
<dbReference type="GO" id="GO:0005813">
    <property type="term" value="C:centrosome"/>
    <property type="evidence" value="ECO:0000314"/>
    <property type="project" value="HPA"/>
</dbReference>
<dbReference type="GO" id="GO:0005737">
    <property type="term" value="C:cytoplasm"/>
    <property type="evidence" value="ECO:0000314"/>
    <property type="project" value="UniProtKB"/>
</dbReference>
<dbReference type="GO" id="GO:0005829">
    <property type="term" value="C:cytosol"/>
    <property type="evidence" value="ECO:0000318"/>
    <property type="project" value="GO_Central"/>
</dbReference>
<dbReference type="GO" id="GO:0070062">
    <property type="term" value="C:extracellular exosome"/>
    <property type="evidence" value="ECO:0007005"/>
    <property type="project" value="UniProtKB"/>
</dbReference>
<dbReference type="GO" id="GO:0005654">
    <property type="term" value="C:nucleoplasm"/>
    <property type="evidence" value="ECO:0000314"/>
    <property type="project" value="HPA"/>
</dbReference>
<dbReference type="GO" id="GO:0005634">
    <property type="term" value="C:nucleus"/>
    <property type="evidence" value="ECO:0000314"/>
    <property type="project" value="UniProtKB"/>
</dbReference>
<dbReference type="GO" id="GO:0000502">
    <property type="term" value="C:proteasome complex"/>
    <property type="evidence" value="ECO:0000314"/>
    <property type="project" value="UniProtKB"/>
</dbReference>
<dbReference type="GO" id="GO:0005839">
    <property type="term" value="C:proteasome core complex"/>
    <property type="evidence" value="ECO:0000314"/>
    <property type="project" value="UniProtKB"/>
</dbReference>
<dbReference type="GO" id="GO:0019774">
    <property type="term" value="C:proteasome core complex, beta-subunit complex"/>
    <property type="evidence" value="ECO:0000250"/>
    <property type="project" value="UniProtKB"/>
</dbReference>
<dbReference type="GO" id="GO:0004175">
    <property type="term" value="F:endopeptidase activity"/>
    <property type="evidence" value="ECO:0000318"/>
    <property type="project" value="GO_Central"/>
</dbReference>
<dbReference type="GO" id="GO:0008233">
    <property type="term" value="F:peptidase activity"/>
    <property type="evidence" value="ECO:0000314"/>
    <property type="project" value="MGI"/>
</dbReference>
<dbReference type="GO" id="GO:0004298">
    <property type="term" value="F:threonine-type endopeptidase activity"/>
    <property type="evidence" value="ECO:0007669"/>
    <property type="project" value="UniProtKB-KW"/>
</dbReference>
<dbReference type="GO" id="GO:0043248">
    <property type="term" value="P:proteasome assembly"/>
    <property type="evidence" value="ECO:0000304"/>
    <property type="project" value="Reactome"/>
</dbReference>
<dbReference type="GO" id="GO:0043161">
    <property type="term" value="P:proteasome-mediated ubiquitin-dependent protein catabolic process"/>
    <property type="evidence" value="ECO:0000318"/>
    <property type="project" value="GO_Central"/>
</dbReference>
<dbReference type="GO" id="GO:0006508">
    <property type="term" value="P:proteolysis"/>
    <property type="evidence" value="ECO:0000314"/>
    <property type="project" value="MGI"/>
</dbReference>
<dbReference type="GO" id="GO:0006979">
    <property type="term" value="P:response to oxidative stress"/>
    <property type="evidence" value="ECO:0007669"/>
    <property type="project" value="Ensembl"/>
</dbReference>
<dbReference type="CDD" id="cd03761">
    <property type="entry name" value="proteasome_beta_type_5"/>
    <property type="match status" value="1"/>
</dbReference>
<dbReference type="FunFam" id="3.60.20.10:FF:000030">
    <property type="entry name" value="Proteasome subunit beta"/>
    <property type="match status" value="1"/>
</dbReference>
<dbReference type="Gene3D" id="3.60.20.10">
    <property type="entry name" value="Glutamine Phosphoribosylpyrophosphate, subunit 1, domain 1"/>
    <property type="match status" value="1"/>
</dbReference>
<dbReference type="InterPro" id="IPR029055">
    <property type="entry name" value="Ntn_hydrolases_N"/>
</dbReference>
<dbReference type="InterPro" id="IPR000243">
    <property type="entry name" value="Pept_T1A_subB"/>
</dbReference>
<dbReference type="InterPro" id="IPR016050">
    <property type="entry name" value="Proteasome_bsu_CS"/>
</dbReference>
<dbReference type="InterPro" id="IPR001353">
    <property type="entry name" value="Proteasome_sua/b"/>
</dbReference>
<dbReference type="InterPro" id="IPR023333">
    <property type="entry name" value="Proteasome_suB-type"/>
</dbReference>
<dbReference type="PANTHER" id="PTHR32194">
    <property type="entry name" value="METALLOPROTEASE TLDD"/>
    <property type="match status" value="1"/>
</dbReference>
<dbReference type="PANTHER" id="PTHR32194:SF11">
    <property type="entry name" value="PROTEASOME SUBUNIT BETA"/>
    <property type="match status" value="1"/>
</dbReference>
<dbReference type="Pfam" id="PF00227">
    <property type="entry name" value="Proteasome"/>
    <property type="match status" value="1"/>
</dbReference>
<dbReference type="PRINTS" id="PR00141">
    <property type="entry name" value="PROTEASOME"/>
</dbReference>
<dbReference type="SUPFAM" id="SSF56235">
    <property type="entry name" value="N-terminal nucleophile aminohydrolases (Ntn hydrolases)"/>
    <property type="match status" value="1"/>
</dbReference>
<dbReference type="PROSITE" id="PS00854">
    <property type="entry name" value="PROTEASOME_BETA_1"/>
    <property type="match status" value="1"/>
</dbReference>
<dbReference type="PROSITE" id="PS51476">
    <property type="entry name" value="PROTEASOME_BETA_2"/>
    <property type="match status" value="1"/>
</dbReference>